<accession>Q96B97</accession>
<accession>B7Z1D5</accession>
<accession>Q5JPT4</accession>
<accession>Q5JPT5</accession>
<accession>Q8IWX6</accession>
<accession>Q8IX98</accession>
<accession>Q96RN4</accession>
<accession>Q9NYR0</accession>
<gene>
    <name type="primary">SH3KBP1</name>
    <name type="synonym">CIN85</name>
</gene>
<reference key="1">
    <citation type="journal article" date="2000" name="Biochem. Biophys. Res. Commun.">
        <title>Cloning and characterization of a novel adaptor protein, CIN85, that interacts with c-Cbl.</title>
        <authorList>
            <person name="Take H."/>
            <person name="Watanabe S."/>
            <person name="Takeda K."/>
            <person name="Yu Z.-X."/>
            <person name="Iwata N."/>
            <person name="Kajigaya S."/>
        </authorList>
    </citation>
    <scope>NUCLEOTIDE SEQUENCE [MRNA] (ISOFORM 1)</scope>
    <scope>INTERACTION WITH CBL</scope>
</reference>
<reference key="2">
    <citation type="journal article" date="2003" name="Int. Immunol.">
        <title>CD2BP3, CIN85 and the structurally related adaptor protein CMS bind to the same CD2 cytoplasmic segment but elicit divergent functional activities.</title>
        <authorList>
            <person name="Tibaldi E.V."/>
            <person name="Reinherz E.L."/>
        </authorList>
    </citation>
    <scope>NUCLEOTIDE SEQUENCE [MRNA] (ISOFORM 2)</scope>
    <source>
        <tissue>T-cell</tissue>
    </source>
</reference>
<reference key="3">
    <citation type="journal article" date="2004" name="Nat. Genet.">
        <title>Complete sequencing and characterization of 21,243 full-length human cDNAs.</title>
        <authorList>
            <person name="Ota T."/>
            <person name="Suzuki Y."/>
            <person name="Nishikawa T."/>
            <person name="Otsuki T."/>
            <person name="Sugiyama T."/>
            <person name="Irie R."/>
            <person name="Wakamatsu A."/>
            <person name="Hayashi K."/>
            <person name="Sato H."/>
            <person name="Nagai K."/>
            <person name="Kimura K."/>
            <person name="Makita H."/>
            <person name="Sekine M."/>
            <person name="Obayashi M."/>
            <person name="Nishi T."/>
            <person name="Shibahara T."/>
            <person name="Tanaka T."/>
            <person name="Ishii S."/>
            <person name="Yamamoto J."/>
            <person name="Saito K."/>
            <person name="Kawai Y."/>
            <person name="Isono Y."/>
            <person name="Nakamura Y."/>
            <person name="Nagahari K."/>
            <person name="Murakami K."/>
            <person name="Yasuda T."/>
            <person name="Iwayanagi T."/>
            <person name="Wagatsuma M."/>
            <person name="Shiratori A."/>
            <person name="Sudo H."/>
            <person name="Hosoiri T."/>
            <person name="Kaku Y."/>
            <person name="Kodaira H."/>
            <person name="Kondo H."/>
            <person name="Sugawara M."/>
            <person name="Takahashi M."/>
            <person name="Kanda K."/>
            <person name="Yokoi T."/>
            <person name="Furuya T."/>
            <person name="Kikkawa E."/>
            <person name="Omura Y."/>
            <person name="Abe K."/>
            <person name="Kamihara K."/>
            <person name="Katsuta N."/>
            <person name="Sato K."/>
            <person name="Tanikawa M."/>
            <person name="Yamazaki M."/>
            <person name="Ninomiya K."/>
            <person name="Ishibashi T."/>
            <person name="Yamashita H."/>
            <person name="Murakawa K."/>
            <person name="Fujimori K."/>
            <person name="Tanai H."/>
            <person name="Kimata M."/>
            <person name="Watanabe M."/>
            <person name="Hiraoka S."/>
            <person name="Chiba Y."/>
            <person name="Ishida S."/>
            <person name="Ono Y."/>
            <person name="Takiguchi S."/>
            <person name="Watanabe S."/>
            <person name="Yosida M."/>
            <person name="Hotuta T."/>
            <person name="Kusano J."/>
            <person name="Kanehori K."/>
            <person name="Takahashi-Fujii A."/>
            <person name="Hara H."/>
            <person name="Tanase T.-O."/>
            <person name="Nomura Y."/>
            <person name="Togiya S."/>
            <person name="Komai F."/>
            <person name="Hara R."/>
            <person name="Takeuchi K."/>
            <person name="Arita M."/>
            <person name="Imose N."/>
            <person name="Musashino K."/>
            <person name="Yuuki H."/>
            <person name="Oshima A."/>
            <person name="Sasaki N."/>
            <person name="Aotsuka S."/>
            <person name="Yoshikawa Y."/>
            <person name="Matsunawa H."/>
            <person name="Ichihara T."/>
            <person name="Shiohata N."/>
            <person name="Sano S."/>
            <person name="Moriya S."/>
            <person name="Momiyama H."/>
            <person name="Satoh N."/>
            <person name="Takami S."/>
            <person name="Terashima Y."/>
            <person name="Suzuki O."/>
            <person name="Nakagawa S."/>
            <person name="Senoh A."/>
            <person name="Mizoguchi H."/>
            <person name="Goto Y."/>
            <person name="Shimizu F."/>
            <person name="Wakebe H."/>
            <person name="Hishigaki H."/>
            <person name="Watanabe T."/>
            <person name="Sugiyama A."/>
            <person name="Takemoto M."/>
            <person name="Kawakami B."/>
            <person name="Yamazaki M."/>
            <person name="Watanabe K."/>
            <person name="Kumagai A."/>
            <person name="Itakura S."/>
            <person name="Fukuzumi Y."/>
            <person name="Fujimori Y."/>
            <person name="Komiyama M."/>
            <person name="Tashiro H."/>
            <person name="Tanigami A."/>
            <person name="Fujiwara T."/>
            <person name="Ono T."/>
            <person name="Yamada K."/>
            <person name="Fujii Y."/>
            <person name="Ozaki K."/>
            <person name="Hirao M."/>
            <person name="Ohmori Y."/>
            <person name="Kawabata A."/>
            <person name="Hikiji T."/>
            <person name="Kobatake N."/>
            <person name="Inagaki H."/>
            <person name="Ikema Y."/>
            <person name="Okamoto S."/>
            <person name="Okitani R."/>
            <person name="Kawakami T."/>
            <person name="Noguchi S."/>
            <person name="Itoh T."/>
            <person name="Shigeta K."/>
            <person name="Senba T."/>
            <person name="Matsumura K."/>
            <person name="Nakajima Y."/>
            <person name="Mizuno T."/>
            <person name="Morinaga M."/>
            <person name="Sasaki M."/>
            <person name="Togashi T."/>
            <person name="Oyama M."/>
            <person name="Hata H."/>
            <person name="Watanabe M."/>
            <person name="Komatsu T."/>
            <person name="Mizushima-Sugano J."/>
            <person name="Satoh T."/>
            <person name="Shirai Y."/>
            <person name="Takahashi Y."/>
            <person name="Nakagawa K."/>
            <person name="Okumura K."/>
            <person name="Nagase T."/>
            <person name="Nomura N."/>
            <person name="Kikuchi H."/>
            <person name="Masuho Y."/>
            <person name="Yamashita R."/>
            <person name="Nakai K."/>
            <person name="Yada T."/>
            <person name="Nakamura Y."/>
            <person name="Ohara O."/>
            <person name="Isogai T."/>
            <person name="Sugano S."/>
        </authorList>
    </citation>
    <scope>NUCLEOTIDE SEQUENCE [LARGE SCALE MRNA] (ISOFORMS 2 AND 3)</scope>
</reference>
<reference key="4">
    <citation type="journal article" date="2005" name="Nature">
        <title>The DNA sequence of the human X chromosome.</title>
        <authorList>
            <person name="Ross M.T."/>
            <person name="Grafham D.V."/>
            <person name="Coffey A.J."/>
            <person name="Scherer S."/>
            <person name="McLay K."/>
            <person name="Muzny D."/>
            <person name="Platzer M."/>
            <person name="Howell G.R."/>
            <person name="Burrows C."/>
            <person name="Bird C.P."/>
            <person name="Frankish A."/>
            <person name="Lovell F.L."/>
            <person name="Howe K.L."/>
            <person name="Ashurst J.L."/>
            <person name="Fulton R.S."/>
            <person name="Sudbrak R."/>
            <person name="Wen G."/>
            <person name="Jones M.C."/>
            <person name="Hurles M.E."/>
            <person name="Andrews T.D."/>
            <person name="Scott C.E."/>
            <person name="Searle S."/>
            <person name="Ramser J."/>
            <person name="Whittaker A."/>
            <person name="Deadman R."/>
            <person name="Carter N.P."/>
            <person name="Hunt S.E."/>
            <person name="Chen R."/>
            <person name="Cree A."/>
            <person name="Gunaratne P."/>
            <person name="Havlak P."/>
            <person name="Hodgson A."/>
            <person name="Metzker M.L."/>
            <person name="Richards S."/>
            <person name="Scott G."/>
            <person name="Steffen D."/>
            <person name="Sodergren E."/>
            <person name="Wheeler D.A."/>
            <person name="Worley K.C."/>
            <person name="Ainscough R."/>
            <person name="Ambrose K.D."/>
            <person name="Ansari-Lari M.A."/>
            <person name="Aradhya S."/>
            <person name="Ashwell R.I."/>
            <person name="Babbage A.K."/>
            <person name="Bagguley C.L."/>
            <person name="Ballabio A."/>
            <person name="Banerjee R."/>
            <person name="Barker G.E."/>
            <person name="Barlow K.F."/>
            <person name="Barrett I.P."/>
            <person name="Bates K.N."/>
            <person name="Beare D.M."/>
            <person name="Beasley H."/>
            <person name="Beasley O."/>
            <person name="Beck A."/>
            <person name="Bethel G."/>
            <person name="Blechschmidt K."/>
            <person name="Brady N."/>
            <person name="Bray-Allen S."/>
            <person name="Bridgeman A.M."/>
            <person name="Brown A.J."/>
            <person name="Brown M.J."/>
            <person name="Bonnin D."/>
            <person name="Bruford E.A."/>
            <person name="Buhay C."/>
            <person name="Burch P."/>
            <person name="Burford D."/>
            <person name="Burgess J."/>
            <person name="Burrill W."/>
            <person name="Burton J."/>
            <person name="Bye J.M."/>
            <person name="Carder C."/>
            <person name="Carrel L."/>
            <person name="Chako J."/>
            <person name="Chapman J.C."/>
            <person name="Chavez D."/>
            <person name="Chen E."/>
            <person name="Chen G."/>
            <person name="Chen Y."/>
            <person name="Chen Z."/>
            <person name="Chinault C."/>
            <person name="Ciccodicola A."/>
            <person name="Clark S.Y."/>
            <person name="Clarke G."/>
            <person name="Clee C.M."/>
            <person name="Clegg S."/>
            <person name="Clerc-Blankenburg K."/>
            <person name="Clifford K."/>
            <person name="Cobley V."/>
            <person name="Cole C.G."/>
            <person name="Conquer J.S."/>
            <person name="Corby N."/>
            <person name="Connor R.E."/>
            <person name="David R."/>
            <person name="Davies J."/>
            <person name="Davis C."/>
            <person name="Davis J."/>
            <person name="Delgado O."/>
            <person name="Deshazo D."/>
            <person name="Dhami P."/>
            <person name="Ding Y."/>
            <person name="Dinh H."/>
            <person name="Dodsworth S."/>
            <person name="Draper H."/>
            <person name="Dugan-Rocha S."/>
            <person name="Dunham A."/>
            <person name="Dunn M."/>
            <person name="Durbin K.J."/>
            <person name="Dutta I."/>
            <person name="Eades T."/>
            <person name="Ellwood M."/>
            <person name="Emery-Cohen A."/>
            <person name="Errington H."/>
            <person name="Evans K.L."/>
            <person name="Faulkner L."/>
            <person name="Francis F."/>
            <person name="Frankland J."/>
            <person name="Fraser A.E."/>
            <person name="Galgoczy P."/>
            <person name="Gilbert J."/>
            <person name="Gill R."/>
            <person name="Gloeckner G."/>
            <person name="Gregory S.G."/>
            <person name="Gribble S."/>
            <person name="Griffiths C."/>
            <person name="Grocock R."/>
            <person name="Gu Y."/>
            <person name="Gwilliam R."/>
            <person name="Hamilton C."/>
            <person name="Hart E.A."/>
            <person name="Hawes A."/>
            <person name="Heath P.D."/>
            <person name="Heitmann K."/>
            <person name="Hennig S."/>
            <person name="Hernandez J."/>
            <person name="Hinzmann B."/>
            <person name="Ho S."/>
            <person name="Hoffs M."/>
            <person name="Howden P.J."/>
            <person name="Huckle E.J."/>
            <person name="Hume J."/>
            <person name="Hunt P.J."/>
            <person name="Hunt A.R."/>
            <person name="Isherwood J."/>
            <person name="Jacob L."/>
            <person name="Johnson D."/>
            <person name="Jones S."/>
            <person name="de Jong P.J."/>
            <person name="Joseph S.S."/>
            <person name="Keenan S."/>
            <person name="Kelly S."/>
            <person name="Kershaw J.K."/>
            <person name="Khan Z."/>
            <person name="Kioschis P."/>
            <person name="Klages S."/>
            <person name="Knights A.J."/>
            <person name="Kosiura A."/>
            <person name="Kovar-Smith C."/>
            <person name="Laird G.K."/>
            <person name="Langford C."/>
            <person name="Lawlor S."/>
            <person name="Leversha M."/>
            <person name="Lewis L."/>
            <person name="Liu W."/>
            <person name="Lloyd C."/>
            <person name="Lloyd D.M."/>
            <person name="Loulseged H."/>
            <person name="Loveland J.E."/>
            <person name="Lovell J.D."/>
            <person name="Lozado R."/>
            <person name="Lu J."/>
            <person name="Lyne R."/>
            <person name="Ma J."/>
            <person name="Maheshwari M."/>
            <person name="Matthews L.H."/>
            <person name="McDowall J."/>
            <person name="McLaren S."/>
            <person name="McMurray A."/>
            <person name="Meidl P."/>
            <person name="Meitinger T."/>
            <person name="Milne S."/>
            <person name="Miner G."/>
            <person name="Mistry S.L."/>
            <person name="Morgan M."/>
            <person name="Morris S."/>
            <person name="Mueller I."/>
            <person name="Mullikin J.C."/>
            <person name="Nguyen N."/>
            <person name="Nordsiek G."/>
            <person name="Nyakatura G."/>
            <person name="O'dell C.N."/>
            <person name="Okwuonu G."/>
            <person name="Palmer S."/>
            <person name="Pandian R."/>
            <person name="Parker D."/>
            <person name="Parrish J."/>
            <person name="Pasternak S."/>
            <person name="Patel D."/>
            <person name="Pearce A.V."/>
            <person name="Pearson D.M."/>
            <person name="Pelan S.E."/>
            <person name="Perez L."/>
            <person name="Porter K.M."/>
            <person name="Ramsey Y."/>
            <person name="Reichwald K."/>
            <person name="Rhodes S."/>
            <person name="Ridler K.A."/>
            <person name="Schlessinger D."/>
            <person name="Schueler M.G."/>
            <person name="Sehra H.K."/>
            <person name="Shaw-Smith C."/>
            <person name="Shen H."/>
            <person name="Sheridan E.M."/>
            <person name="Shownkeen R."/>
            <person name="Skuce C.D."/>
            <person name="Smith M.L."/>
            <person name="Sotheran E.C."/>
            <person name="Steingruber H.E."/>
            <person name="Steward C.A."/>
            <person name="Storey R."/>
            <person name="Swann R.M."/>
            <person name="Swarbreck D."/>
            <person name="Tabor P.E."/>
            <person name="Taudien S."/>
            <person name="Taylor T."/>
            <person name="Teague B."/>
            <person name="Thomas K."/>
            <person name="Thorpe A."/>
            <person name="Timms K."/>
            <person name="Tracey A."/>
            <person name="Trevanion S."/>
            <person name="Tromans A.C."/>
            <person name="d'Urso M."/>
            <person name="Verduzco D."/>
            <person name="Villasana D."/>
            <person name="Waldron L."/>
            <person name="Wall M."/>
            <person name="Wang Q."/>
            <person name="Warren J."/>
            <person name="Warry G.L."/>
            <person name="Wei X."/>
            <person name="West A."/>
            <person name="Whitehead S.L."/>
            <person name="Whiteley M.N."/>
            <person name="Wilkinson J.E."/>
            <person name="Willey D.L."/>
            <person name="Williams G."/>
            <person name="Williams L."/>
            <person name="Williamson A."/>
            <person name="Williamson H."/>
            <person name="Wilming L."/>
            <person name="Woodmansey R.L."/>
            <person name="Wray P.W."/>
            <person name="Yen J."/>
            <person name="Zhang J."/>
            <person name="Zhou J."/>
            <person name="Zoghbi H."/>
            <person name="Zorilla S."/>
            <person name="Buck D."/>
            <person name="Reinhardt R."/>
            <person name="Poustka A."/>
            <person name="Rosenthal A."/>
            <person name="Lehrach H."/>
            <person name="Meindl A."/>
            <person name="Minx P.J."/>
            <person name="Hillier L.W."/>
            <person name="Willard H.F."/>
            <person name="Wilson R.K."/>
            <person name="Waterston R.H."/>
            <person name="Rice C.M."/>
            <person name="Vaudin M."/>
            <person name="Coulson A."/>
            <person name="Nelson D.L."/>
            <person name="Weinstock G."/>
            <person name="Sulston J.E."/>
            <person name="Durbin R.M."/>
            <person name="Hubbard T."/>
            <person name="Gibbs R.A."/>
            <person name="Beck S."/>
            <person name="Rogers J."/>
            <person name="Bentley D.R."/>
        </authorList>
    </citation>
    <scope>NUCLEOTIDE SEQUENCE [LARGE SCALE GENOMIC DNA]</scope>
</reference>
<reference key="5">
    <citation type="journal article" date="2004" name="Genome Res.">
        <title>The status, quality, and expansion of the NIH full-length cDNA project: the Mammalian Gene Collection (MGC).</title>
        <authorList>
            <consortium name="The MGC Project Team"/>
        </authorList>
    </citation>
    <scope>NUCLEOTIDE SEQUENCE [LARGE SCALE MRNA] (ISOFORM 1)</scope>
    <source>
        <tissue>Adrenal cortex</tissue>
        <tissue>Uterus</tissue>
    </source>
</reference>
<reference key="6">
    <citation type="journal article" date="2001" name="Cytogenet. Cell Genet.">
        <title>Assignment of SH3KBP1 to human chromosome band Xp22.1--&gt;p21.3 by in situ hybridization.</title>
        <authorList>
            <person name="Narita T."/>
            <person name="Amano F."/>
            <person name="Yoshizaki K."/>
            <person name="Nishimoto N."/>
            <person name="Nishimura T."/>
            <person name="Tajima T."/>
            <person name="Namiki H."/>
            <person name="Taniyama T."/>
        </authorList>
    </citation>
    <scope>NUCLEOTIDE SEQUENCE [MRNA] OF 262-665</scope>
    <scope>VARIANT LEU-382</scope>
</reference>
<reference key="7">
    <citation type="journal article" date="2000" name="Biochem. Biophys. Res. Commun.">
        <title>Characterization of the CIN85 adaptor protein and identification of components involved in CIN85 complexes.</title>
        <authorList>
            <person name="Watanabe S."/>
            <person name="Take H."/>
            <person name="Takeda K."/>
            <person name="Yu Z.X."/>
            <person name="Iwata N."/>
            <person name="Kajigaya S."/>
        </authorList>
    </citation>
    <scope>INTERACTION WITH BLNK; CRK; BCAR1; PIK3R3; GRB2 AND SOS1</scope>
    <scope>SELF-ASSOCIATION</scope>
</reference>
<reference key="8">
    <citation type="journal article" date="2002" name="J. Biol. Chem.">
        <title>CIN85 participates in Cbl-b-mediated down-regulation of receptor tyrosine kinases.</title>
        <authorList>
            <person name="Szymkiewicz I."/>
            <person name="Kowanetz K."/>
            <person name="Soubeyran P."/>
            <person name="Dinarina A."/>
            <person name="Lipkowitz S."/>
            <person name="Dikic I."/>
        </authorList>
    </citation>
    <scope>INTERACTION WITH CBLB AND ENDOPHILINS</scope>
    <scope>LACK OF INTERACTION WITH CBLC</scope>
    <scope>FUNCTION IN RECEPTOR INTERNALIZATION</scope>
    <scope>SUBCELLULAR LOCATION</scope>
</reference>
<reference key="9">
    <citation type="journal article" date="2002" name="Nature">
        <title>Cbl-CIN85-endophilin complex mediates ligand-induced downregulation of EGF receptors.</title>
        <authorList>
            <person name="Soubeyran P."/>
            <person name="Kowanetz K."/>
            <person name="Szymkiewicz I."/>
            <person name="Langdon W.Y."/>
            <person name="Dikic I."/>
        </authorList>
    </citation>
    <scope>FUNCTION IN RECEPTOR INTERNALIZATION</scope>
    <scope>INTERACTION WITH EGFR; SH3GL1; SH3GL2; SH3GL3 AND CBL</scope>
    <scope>SUBCELLULAR LOCATION</scope>
</reference>
<reference key="10">
    <citation type="journal article" date="2002" name="Nature">
        <title>The endophilin-CIN85-Cbl complex mediates ligand-dependent downregulation of c-Met.</title>
        <authorList>
            <person name="Petrelli A."/>
            <person name="Gilestro G.F."/>
            <person name="Lanzardo S."/>
            <person name="Comoglio P.M."/>
            <person name="Migone N."/>
            <person name="Giordano S."/>
        </authorList>
    </citation>
    <scope>FUNCTION IN RECEPTOR INTERNALIZATION</scope>
    <scope>INTERACTION WITH SH3GL1; SH3GL2; SH3GL3; CBL AND MET</scope>
</reference>
<reference key="11">
    <citation type="journal article" date="2002" name="Proc. Natl. Acad. Sci. U.S.A.">
        <title>Cbl-directed monoubiquitination of CIN85 is involved in regulation of ligand-induced degradation of EGF receptors.</title>
        <authorList>
            <person name="Haglund K."/>
            <person name="Shimokawa N."/>
            <person name="Szymkiewicz I."/>
            <person name="Dikic I."/>
        </authorList>
    </citation>
    <scope>UBIQUITINATION BY CBL AND CBLB</scope>
</reference>
<reference key="12">
    <citation type="journal article" date="2003" name="FEBS Lett.">
        <title>Dab2 links CIN85 with clathrin-mediated receptor internalization.</title>
        <authorList>
            <person name="Kowanetz K."/>
            <person name="Terzic J."/>
            <person name="Dikic I."/>
        </authorList>
    </citation>
    <scope>INTERACTION WITH DAB2</scope>
    <scope>IDENTIFICATION IN A COMPLEX WITH DAB2 AND CLATHRIN</scope>
</reference>
<reference key="13">
    <citation type="journal article" date="2003" name="J. Cell Sci.">
        <title>SETA/CIN85/Ruk and its binding partner AIP1 associate with diverse cytoskeletal elements, including FAKs, and modulate cell adhesion.</title>
        <authorList>
            <person name="Schmidt M.H."/>
            <person name="Chen B."/>
            <person name="Randazzo L.M."/>
            <person name="Boegler O."/>
        </authorList>
    </citation>
    <scope>FUNCTION IN CELL ADHESION</scope>
    <scope>INTERACTION WITH PDCD6IP; PTK2/FAK1 AND PTK2B/PYK2</scope>
</reference>
<reference key="14">
    <citation type="journal article" date="2003" name="J. Biol. Chem.">
        <title>Linking the T cell surface protein CD2 to the actin-capping protein CAPZ via CMS and CIN85.</title>
        <authorList>
            <person name="Hutchings N.J."/>
            <person name="Clarkson N."/>
            <person name="Chalkley R."/>
            <person name="Barclay A.N."/>
            <person name="Brown M.H."/>
        </authorList>
    </citation>
    <scope>INTERACTION WITH CD2 AND F-ACTIN CAPPING PROTEIN</scope>
</reference>
<reference key="15">
    <citation type="journal article" date="2003" name="Proc. Natl. Acad. Sci. U.S.A.">
        <title>Epidermal growth factor receptor signaling intensity determines intracellular protein interactions, ubiquitination, and internalization.</title>
        <authorList>
            <person name="Schmidt M.H."/>
            <person name="Furnari F.B."/>
            <person name="Cavenee W.K."/>
            <person name="Bogler O."/>
        </authorList>
    </citation>
    <scope>FUNCTION IN RECEPTOR INTERNALIZATION</scope>
</reference>
<reference key="16">
    <citation type="journal article" date="2004" name="Anal. Chem.">
        <title>Robust phosphoproteomic profiling of tyrosine phosphorylation sites from human T cells using immobilized metal affinity chromatography and tandem mass spectrometry.</title>
        <authorList>
            <person name="Brill L.M."/>
            <person name="Salomon A.R."/>
            <person name="Ficarro S.B."/>
            <person name="Mukherji M."/>
            <person name="Stettler-Gill M."/>
            <person name="Peters E.C."/>
        </authorList>
    </citation>
    <scope>PHOSPHORYLATION [LARGE SCALE ANALYSIS] AT SER-230</scope>
    <scope>IDENTIFICATION BY MASS SPECTROMETRY [LARGE SCALE ANALYSIS]</scope>
    <source>
        <tissue>Leukemic T-cell</tissue>
    </source>
</reference>
<reference key="17">
    <citation type="journal article" date="2004" name="Mol. Biol. Cell">
        <title>CIN85 associates with multiple effectors controlling intracellular trafficking of epidermal growth factor receptors.</title>
        <authorList>
            <person name="Kowanetz K."/>
            <person name="Husnjak K."/>
            <person name="Holler D."/>
            <person name="Kowanetz M."/>
            <person name="Soubeyran P."/>
            <person name="Hirsch D."/>
            <person name="Schmidt M.H."/>
            <person name="Pavelic K."/>
            <person name="De Camilli P."/>
            <person name="Randazzo P.A."/>
            <person name="Dikic I."/>
        </authorList>
    </citation>
    <scope>FUNCTION IN RECEPTOR INTERNALIZATION</scope>
    <scope>INTERACTION WITH ASAP1; ARAP3; HIP1R; SYNJ2; INPP5D; STAP1 AND EGFR</scope>
    <scope>IDENTIFICATION IN A COMPLEX WITH ASAP1 AND ARAP3</scope>
    <scope>SUBCELLULAR LOCATION</scope>
</reference>
<reference key="18">
    <citation type="journal article" date="2004" name="Mol. Cell. Biol.">
        <title>Alix/AIP1 antagonizes epidermal growth factor receptor downregulation by the Cbl-SETA/CIN85 complex.</title>
        <authorList>
            <person name="Schmidt M.H."/>
            <person name="Hoeller D."/>
            <person name="Yu J."/>
            <person name="Furnari F.B."/>
            <person name="Cavenee W.K."/>
            <person name="Dikic I."/>
            <person name="Bogler O."/>
        </authorList>
    </citation>
    <scope>INTERACTION WITH PDCD6IP; EGFR; CBL AND CBLB</scope>
</reference>
<reference key="19">
    <citation type="journal article" date="2005" name="Biochem. Biophys. Res. Commun.">
        <title>CIN85 regulates the ability of MEKK4 to activate the p38 MAP kinase pathway.</title>
        <authorList>
            <person name="Aissouni Y."/>
            <person name="Zapart G."/>
            <person name="Iovanna J.L."/>
            <person name="Dikic I."/>
            <person name="Soubeyran P."/>
        </authorList>
    </citation>
    <scope>FUNCTION</scope>
    <scope>INTERACTION WITH MAP3K4</scope>
</reference>
<reference key="20">
    <citation type="journal article" date="2005" name="EMBO Rep.">
        <title>Sprouty2 acts at the Cbl/CIN85 interface to inhibit epidermal growth factor receptor downregulation.</title>
        <authorList>
            <person name="Haglund K."/>
            <person name="Schmidt M.H."/>
            <person name="Wong E.S."/>
            <person name="Guy G.R."/>
            <person name="Dikic I."/>
        </authorList>
    </citation>
    <scope>INTERACTION WITH SPRY2</scope>
</reference>
<reference key="21">
    <citation type="journal article" date="2005" name="Exp. Cell Res.">
        <title>CIN85 associates with TNF receptor 1 via Src and modulates TNF-alpha-induced apoptosis.</title>
        <authorList>
            <person name="Narita T."/>
            <person name="Nishimura T."/>
            <person name="Yoshizaki K."/>
            <person name="Taniyama T."/>
        </authorList>
    </citation>
    <scope>FUNCTION IN APOPTOSIS</scope>
    <scope>INTERACTION WITH SRC; LCK; LYN; FGR; FYN; HCK; TRADD; BIRC2; TRAF1; TRAF2 AND TNFR1</scope>
</reference>
<reference key="22">
    <citation type="journal article" date="2005" name="J. Immunol.">
        <title>CIN85 regulates the ligand-dependent endocytosis of the IgE receptor: a new molecular mechanism to dampen mast cell function.</title>
        <authorList>
            <person name="Molfetta R."/>
            <person name="Belleudi F."/>
            <person name="Peruzzi G."/>
            <person name="Morrone S."/>
            <person name="Leone L."/>
            <person name="Dikic I."/>
            <person name="Piccoli M."/>
            <person name="Frati L."/>
            <person name="Torrisi M.R."/>
            <person name="Santoni A."/>
            <person name="Paolini R."/>
        </authorList>
    </citation>
    <scope>FUNCTION IN RECEPTOR INTERNALIZATION</scope>
</reference>
<reference key="23">
    <citation type="journal article" date="2006" name="Cell">
        <title>A Rich1/Amot complex regulates the Cdc42 GTPase and apical-polarity proteins in epithelial cells.</title>
        <authorList>
            <person name="Wells C.D."/>
            <person name="Fawcett J.P."/>
            <person name="Traweger A."/>
            <person name="Yamanaka Y."/>
            <person name="Goudreault M."/>
            <person name="Elder K."/>
            <person name="Kulkarni S."/>
            <person name="Gish G."/>
            <person name="Virag C."/>
            <person name="Lim C."/>
            <person name="Colwill K."/>
            <person name="Starostine A."/>
            <person name="Metalnikov P."/>
            <person name="Pawson T."/>
        </authorList>
    </citation>
    <scope>INTERACTION WITH ARHGAP17</scope>
</reference>
<reference key="24">
    <citation type="journal article" date="2006" name="Cell">
        <title>Global, in vivo, and site-specific phosphorylation dynamics in signaling networks.</title>
        <authorList>
            <person name="Olsen J.V."/>
            <person name="Blagoev B."/>
            <person name="Gnad F."/>
            <person name="Macek B."/>
            <person name="Kumar C."/>
            <person name="Mortensen P."/>
            <person name="Mann M."/>
        </authorList>
    </citation>
    <scope>PHOSPHORYLATION [LARGE SCALE ANALYSIS] AT SER-230</scope>
    <scope>IDENTIFICATION BY MASS SPECTROMETRY [LARGE SCALE ANALYSIS]</scope>
    <source>
        <tissue>Cervix carcinoma</tissue>
    </source>
</reference>
<reference key="25">
    <citation type="journal article" date="2006" name="J. Biochem.">
        <title>CIN85 is localized at synapses and forms a complex with S-SCAM via dendrin.</title>
        <authorList>
            <person name="Kawata A."/>
            <person name="Iida J."/>
            <person name="Ikeda M."/>
            <person name="Sato Y."/>
            <person name="Mori H."/>
            <person name="Kansaku A."/>
            <person name="Sumita K."/>
            <person name="Fujiwara N."/>
            <person name="Rokukawa C."/>
            <person name="Hamano M."/>
            <person name="Hirabayashi S."/>
            <person name="Hata Y."/>
        </authorList>
    </citation>
    <scope>INTERACTION WITH DDN AND MAGI2</scope>
    <scope>SUBCELLULAR LOCATION</scope>
</reference>
<reference key="26">
    <citation type="journal article" date="2006" name="J. Biol. Chem.">
        <title>CFBP is a novel tyrosine-phosphorylated protein that might function as a regulator of CIN85/CD2AP.</title>
        <authorList>
            <person name="Konishi H."/>
            <person name="Tashiro K."/>
            <person name="Murata Y."/>
            <person name="Nabeshi H."/>
            <person name="Yamauchi E."/>
            <person name="Taniguchi H."/>
        </authorList>
    </citation>
    <scope>INTERACTION WITH MVB12A</scope>
</reference>
<reference key="27">
    <citation type="journal article" date="2008" name="J. Proteome Res.">
        <title>Phosphorylation analysis of primary human T lymphocytes using sequential IMAC and titanium oxide enrichment.</title>
        <authorList>
            <person name="Carrascal M."/>
            <person name="Ovelleiro D."/>
            <person name="Casas V."/>
            <person name="Gay M."/>
            <person name="Abian J."/>
        </authorList>
    </citation>
    <scope>PHOSPHORYLATION [LARGE SCALE ANALYSIS] AT SER-230</scope>
    <scope>IDENTIFICATION BY MASS SPECTROMETRY [LARGE SCALE ANALYSIS]</scope>
    <source>
        <tissue>T-cell</tissue>
    </source>
</reference>
<reference key="28">
    <citation type="journal article" date="2008" name="Proc. Natl. Acad. Sci. U.S.A.">
        <title>A quantitative atlas of mitotic phosphorylation.</title>
        <authorList>
            <person name="Dephoure N."/>
            <person name="Zhou C."/>
            <person name="Villen J."/>
            <person name="Beausoleil S.A."/>
            <person name="Bakalarski C.E."/>
            <person name="Elledge S.J."/>
            <person name="Gygi S.P."/>
        </authorList>
    </citation>
    <scope>PHOSPHORYLATION [LARGE SCALE ANALYSIS] AT THR-254; SER-436; SER-509; SER-511; SER-521 AND SER-587</scope>
    <scope>IDENTIFICATION BY MASS SPECTROMETRY [LARGE SCALE ANALYSIS]</scope>
    <source>
        <tissue>Cervix carcinoma</tissue>
    </source>
</reference>
<reference key="29">
    <citation type="journal article" date="2009" name="Sci. Signal.">
        <title>Quantitative phosphoproteomic analysis of T cell receptor signaling reveals system-wide modulation of protein-protein interactions.</title>
        <authorList>
            <person name="Mayya V."/>
            <person name="Lundgren D.H."/>
            <person name="Hwang S.-I."/>
            <person name="Rezaul K."/>
            <person name="Wu L."/>
            <person name="Eng J.K."/>
            <person name="Rodionov V."/>
            <person name="Han D.K."/>
        </authorList>
    </citation>
    <scope>PHOSPHORYLATION [LARGE SCALE ANALYSIS] AT SER-230</scope>
    <scope>IDENTIFICATION BY MASS SPECTROMETRY [LARGE SCALE ANALYSIS]</scope>
    <source>
        <tissue>Leukemic T-cell</tissue>
    </source>
</reference>
<reference key="30">
    <citation type="journal article" date="2010" name="PLoS ONE">
        <title>Phosphorylation of human tristetraprolin in response to its interaction with the Cbl interacting protein CIN85.</title>
        <authorList>
            <person name="Kedar V.P."/>
            <person name="Darby M.K."/>
            <person name="Williams J.G."/>
            <person name="Blackshear P.J."/>
        </authorList>
    </citation>
    <scope>INTERACTION WITH MAP3K4 AND ZFP36</scope>
    <scope>SUBCELLULAR LOCATION</scope>
</reference>
<reference key="31">
    <citation type="journal article" date="2010" name="Sci. Signal.">
        <title>Quantitative phosphoproteomics reveals widespread full phosphorylation site occupancy during mitosis.</title>
        <authorList>
            <person name="Olsen J.V."/>
            <person name="Vermeulen M."/>
            <person name="Santamaria A."/>
            <person name="Kumar C."/>
            <person name="Miller M.L."/>
            <person name="Jensen L.J."/>
            <person name="Gnad F."/>
            <person name="Cox J."/>
            <person name="Jensen T.S."/>
            <person name="Nigg E.A."/>
            <person name="Brunak S."/>
            <person name="Mann M."/>
        </authorList>
    </citation>
    <scope>PHOSPHORYLATION [LARGE SCALE ANALYSIS] AT SER-230; SER-436 AND SER-587</scope>
    <scope>IDENTIFICATION BY MASS SPECTROMETRY [LARGE SCALE ANALYSIS]</scope>
    <source>
        <tissue>Cervix carcinoma</tissue>
    </source>
</reference>
<reference key="32">
    <citation type="journal article" date="2011" name="Biol. Cell">
        <title>ARAP1 association with CIN85 affects epidermal growth factor receptor endocytic trafficking.</title>
        <authorList>
            <person name="Yoon H.Y."/>
            <person name="Kales S.C."/>
            <person name="Luo R."/>
            <person name="Lipkowitz S."/>
            <person name="Randazzo P.A."/>
        </authorList>
    </citation>
    <scope>FUNCTION</scope>
    <scope>INTERACTION WITH ARAP1</scope>
</reference>
<reference key="33">
    <citation type="journal article" date="2011" name="BMC Biol.">
        <title>Identification and characterization of a set of conserved and new regulators of cytoskeletal organisation, cell morphology and migration.</title>
        <authorList>
            <person name="Bai S.W."/>
            <person name="Herrera-Abreu M.T."/>
            <person name="Rohn J.L."/>
            <person name="Racine V."/>
            <person name="Tajadura V."/>
            <person name="Suryavanshi N."/>
            <person name="Bechtel S."/>
            <person name="Wiemann S."/>
            <person name="Baum B."/>
            <person name="Ridley A.J."/>
        </authorList>
    </citation>
    <scope>FUNCTION</scope>
</reference>
<reference key="34">
    <citation type="journal article" date="2011" name="BMC Syst. Biol.">
        <title>Initial characterization of the human central proteome.</title>
        <authorList>
            <person name="Burkard T.R."/>
            <person name="Planyavsky M."/>
            <person name="Kaupe I."/>
            <person name="Breitwieser F.P."/>
            <person name="Buerckstuemmer T."/>
            <person name="Bennett K.L."/>
            <person name="Superti-Furga G."/>
            <person name="Colinge J."/>
        </authorList>
    </citation>
    <scope>IDENTIFICATION BY MASS SPECTROMETRY [LARGE SCALE ANALYSIS]</scope>
</reference>
<reference key="35">
    <citation type="journal article" date="2011" name="Sci. Signal.">
        <title>System-wide temporal characterization of the proteome and phosphoproteome of human embryonic stem cell differentiation.</title>
        <authorList>
            <person name="Rigbolt K.T."/>
            <person name="Prokhorova T.A."/>
            <person name="Akimov V."/>
            <person name="Henningsen J."/>
            <person name="Johansen P.T."/>
            <person name="Kratchmarova I."/>
            <person name="Kassem M."/>
            <person name="Mann M."/>
            <person name="Olsen J.V."/>
            <person name="Blagoev B."/>
        </authorList>
    </citation>
    <scope>PHOSPHORYLATION [LARGE SCALE ANALYSIS] AT SER-230</scope>
    <scope>IDENTIFICATION BY MASS SPECTROMETRY [LARGE SCALE ANALYSIS]</scope>
</reference>
<reference key="36">
    <citation type="journal article" date="2013" name="J. Proteome Res.">
        <title>Toward a comprehensive characterization of a human cancer cell phosphoproteome.</title>
        <authorList>
            <person name="Zhou H."/>
            <person name="Di Palma S."/>
            <person name="Preisinger C."/>
            <person name="Peng M."/>
            <person name="Polat A.N."/>
            <person name="Heck A.J."/>
            <person name="Mohammed S."/>
        </authorList>
    </citation>
    <scope>PHOSPHORYLATION [LARGE SCALE ANALYSIS] AT SER-230; THR-254; SER-436 AND SER-587</scope>
    <scope>IDENTIFICATION BY MASS SPECTROMETRY [LARGE SCALE ANALYSIS]</scope>
    <source>
        <tissue>Cervix carcinoma</tissue>
        <tissue>Erythroleukemia</tissue>
    </source>
</reference>
<reference key="37">
    <citation type="journal article" date="2014" name="J. Proteomics">
        <title>An enzyme assisted RP-RPLC approach for in-depth analysis of human liver phosphoproteome.</title>
        <authorList>
            <person name="Bian Y."/>
            <person name="Song C."/>
            <person name="Cheng K."/>
            <person name="Dong M."/>
            <person name="Wang F."/>
            <person name="Huang J."/>
            <person name="Sun D."/>
            <person name="Wang L."/>
            <person name="Ye M."/>
            <person name="Zou H."/>
        </authorList>
    </citation>
    <scope>PHOSPHORYLATION [LARGE SCALE ANALYSIS] AT SER-183; SER-509 AND SER-511</scope>
    <scope>IDENTIFICATION BY MASS SPECTROMETRY [LARGE SCALE ANALYSIS]</scope>
    <source>
        <tissue>Liver</tissue>
    </source>
</reference>
<reference key="38">
    <citation type="journal article" date="2018" name="J. Exp. Med.">
        <title>Germline deletion of CIN85 in humans with X chromosome-linked antibody deficiency.</title>
        <authorList>
            <person name="Keller B."/>
            <person name="Shoukier M."/>
            <person name="Schulz K."/>
            <person name="Bhatt A."/>
            <person name="Heine I."/>
            <person name="Strohmeier V."/>
            <person name="Speckmann C."/>
            <person name="Engels N."/>
            <person name="Warnatz K."/>
            <person name="Wienands J."/>
        </authorList>
    </citation>
    <scope>FUNCTION</scope>
    <scope>INVOLVEMENT IN IMD61</scope>
</reference>
<reference key="39">
    <citation type="journal article" date="2019" name="Virology">
        <title>Structural characterization and biological function of bivalent binding of CD2AP to intrinsically disordered domain of chikungunya virus nsP3 protein.</title>
        <authorList>
            <person name="Agback P."/>
            <person name="Dominguez F."/>
            <person name="Pustovalova Y."/>
            <person name="Lukash T."/>
            <person name="Shiliaev N."/>
            <person name="Orekhov V.Y."/>
            <person name="Frolov I."/>
            <person name="Agback T."/>
            <person name="Frolova E.I."/>
        </authorList>
    </citation>
    <scope>INTERACTION WITH CHIKUNGUNYA VIRUS NON-STRUCTURAL PROTEIN 3 (MICROBIAL INFECTION)</scope>
</reference>
<reference key="40">
    <citation type="journal article" date="2005" name="Nat. Struct. Mol. Biol.">
        <title>Cbl promotes clustering of endocytic adaptor proteins.</title>
        <authorList>
            <person name="Jozic D."/>
            <person name="Cardenes N."/>
            <person name="Deribe Y.L."/>
            <person name="Moncalian G."/>
            <person name="Hoeller D."/>
            <person name="Groemping Y."/>
            <person name="Dikic I."/>
            <person name="Rittinger K."/>
            <person name="Bravo J."/>
        </authorList>
    </citation>
    <scope>X-RAY CRYSTALLOGRAPHY (2.0 ANGSTROMS) OF 1-58 IN COMPLEX WITH CBLB</scope>
</reference>
<sequence length="665" mass="73126">MVEAIVEFDYQAQHDDELTISVGEIITNIRKEDGGWWEGQINGRRGLFPDNFVREIKKEMKKDPLTNKAPEKPLHEVPSGNSLLSSETILRTNKRGERRRRRCQVAFSYLPQNDDELELKVGDIIEVVGEVEEGWWEGVLNGKTGMFPSNFIKELSGESDELGISQDEQLSKSSLRETTGSESDGGDSSSTKSEGANGTVATAAIQPKKVKGVGFGDIFKDKPIKLRPRSIEVENDFLPVEKTIGKKLPATTATPDSSKTEMDSRTKSKDYCKVIFPYEAQNDDELTIKEGDIVTLINKDCIDVGWWEGELNGRRGVFPDNFVKLLPPDFEKEGNRPKKPPPPSAPVIKQGAGTTERKHEIKKIPPERPEMLPNRTEEKERPEREPKLDLQKPSVPAIPPKKPRPPKTNSLSRPGALPPRRPERPVGPLTHTRGDSPKIDLAGSSLSGILDKDLSDRSNDIDLEGFDSVVSSTEKLSHPTTSRPKATGRRPPSQSLTSSSLSSPDIFDSPSPEEDKEEHISLAHRGVDASKKTSKTVTISQVSDNKASLPPKPGTMAAGGGGPAPLSSAAPSPLSSSLGTAGHRANSPSLFGTEGKPKMEPAASSQAAVEELRTQVRELRSIIETMKDQQKREIKQLLSELDEEKKIRLRLQMEVNDIKKALQSK</sequence>
<name>SH3K1_HUMAN</name>
<keyword id="KW-0002">3D-structure</keyword>
<keyword id="KW-0025">Alternative splicing</keyword>
<keyword id="KW-0053">Apoptosis</keyword>
<keyword id="KW-0965">Cell junction</keyword>
<keyword id="KW-0175">Coiled coil</keyword>
<keyword id="KW-0963">Cytoplasm</keyword>
<keyword id="KW-0968">Cytoplasmic vesicle</keyword>
<keyword id="KW-0206">Cytoskeleton</keyword>
<keyword id="KW-0254">Endocytosis</keyword>
<keyword id="KW-0945">Host-virus interaction</keyword>
<keyword id="KW-0472">Membrane</keyword>
<keyword id="KW-0597">Phosphoprotein</keyword>
<keyword id="KW-1267">Proteomics identification</keyword>
<keyword id="KW-1185">Reference proteome</keyword>
<keyword id="KW-0677">Repeat</keyword>
<keyword id="KW-0728">SH3 domain</keyword>
<keyword id="KW-0729">SH3-binding</keyword>
<keyword id="KW-0770">Synapse</keyword>
<keyword id="KW-0771">Synaptosome</keyword>
<keyword id="KW-0832">Ubl conjugation</keyword>
<feature type="chain" id="PRO_0000097728" description="SH3 domain-containing kinase-binding protein 1">
    <location>
        <begin position="1"/>
        <end position="665"/>
    </location>
</feature>
<feature type="domain" description="SH3 1" evidence="4">
    <location>
        <begin position="1"/>
        <end position="58"/>
    </location>
</feature>
<feature type="domain" description="SH3 2" evidence="4">
    <location>
        <begin position="98"/>
        <end position="157"/>
    </location>
</feature>
<feature type="domain" description="SH3 3" evidence="4">
    <location>
        <begin position="267"/>
        <end position="328"/>
    </location>
</feature>
<feature type="region of interest" description="Disordered" evidence="5">
    <location>
        <begin position="159"/>
        <end position="200"/>
    </location>
</feature>
<feature type="region of interest" description="Disordered" evidence="5">
    <location>
        <begin position="328"/>
        <end position="444"/>
    </location>
</feature>
<feature type="region of interest" description="Disordered" evidence="5">
    <location>
        <begin position="467"/>
        <end position="610"/>
    </location>
</feature>
<feature type="coiled-coil region" evidence="3">
    <location>
        <begin position="602"/>
        <end position="664"/>
    </location>
</feature>
<feature type="compositionally biased region" description="Low complexity" evidence="5">
    <location>
        <begin position="177"/>
        <end position="195"/>
    </location>
</feature>
<feature type="compositionally biased region" description="Basic and acidic residues" evidence="5">
    <location>
        <begin position="355"/>
        <end position="390"/>
    </location>
</feature>
<feature type="compositionally biased region" description="Polar residues" evidence="5">
    <location>
        <begin position="469"/>
        <end position="484"/>
    </location>
</feature>
<feature type="compositionally biased region" description="Low complexity" evidence="5">
    <location>
        <begin position="491"/>
        <end position="510"/>
    </location>
</feature>
<feature type="compositionally biased region" description="Basic and acidic residues" evidence="5">
    <location>
        <begin position="517"/>
        <end position="531"/>
    </location>
</feature>
<feature type="compositionally biased region" description="Polar residues" evidence="5">
    <location>
        <begin position="535"/>
        <end position="546"/>
    </location>
</feature>
<feature type="compositionally biased region" description="Low complexity" evidence="5">
    <location>
        <begin position="564"/>
        <end position="582"/>
    </location>
</feature>
<feature type="modified residue" description="Phosphoserine" evidence="2">
    <location>
        <position position="156"/>
    </location>
</feature>
<feature type="modified residue" description="Phosphoserine" evidence="2">
    <location>
        <position position="159"/>
    </location>
</feature>
<feature type="modified residue" description="Phosphoserine" evidence="42">
    <location>
        <position position="183"/>
    </location>
</feature>
<feature type="modified residue" description="Phosphoserine" evidence="34 35 37 38 39 40 41">
    <location>
        <position position="230"/>
    </location>
</feature>
<feature type="modified residue" description="Phosphothreonine" evidence="36 41">
    <location>
        <position position="254"/>
    </location>
</feature>
<feature type="modified residue" description="Phosphoserine" evidence="36 39 41">
    <location>
        <position position="436"/>
    </location>
</feature>
<feature type="modified residue" description="Phosphoserine" evidence="36 42">
    <location>
        <position position="509"/>
    </location>
</feature>
<feature type="modified residue" description="Phosphoserine" evidence="36 42">
    <location>
        <position position="511"/>
    </location>
</feature>
<feature type="modified residue" description="Phosphoserine" evidence="36">
    <location>
        <position position="521"/>
    </location>
</feature>
<feature type="modified residue" description="Phosphoserine" evidence="36 39 41">
    <location>
        <position position="587"/>
    </location>
</feature>
<feature type="splice variant" id="VSP_007504" description="In isoform 2." evidence="31 32">
    <original>MVEAIVEFDYQAQHDDELTISVGEIITNIRKEDGGWWEGQINGRRGLFPDNFVR</original>
    <variation>MEVSAAKAPSAADLSEI</variation>
    <location>
        <begin position="1"/>
        <end position="54"/>
    </location>
</feature>
<feature type="splice variant" id="VSP_044655" description="In isoform 3." evidence="32">
    <original>MVEA</original>
    <variation>MGEE</variation>
    <location>
        <begin position="1"/>
        <end position="4"/>
    </location>
</feature>
<feature type="splice variant" id="VSP_044656" description="In isoform 3." evidence="32">
    <location>
        <begin position="5"/>
        <end position="242"/>
    </location>
</feature>
<feature type="sequence variant" id="VAR_015667" description="In dbSNP:rs1310665369." evidence="8">
    <original>P</original>
    <variation>L</variation>
    <location>
        <position position="382"/>
    </location>
</feature>
<feature type="sequence conflict" description="In Ref. 3; BAH11471." evidence="33" ref="3">
    <original>I</original>
    <variation>T</variation>
    <location>
        <position position="288"/>
    </location>
</feature>
<feature type="sequence conflict" description="In Ref. 3; BAH11471." evidence="33" ref="3">
    <original>V</original>
    <variation>A</variation>
    <location>
        <position position="426"/>
    </location>
</feature>
<feature type="sequence conflict" description="In Ref. 5; AAH15806." evidence="33" ref="5">
    <original>A</original>
    <variation>V</variation>
    <location>
        <position position="570"/>
    </location>
</feature>
<feature type="strand" evidence="43">
    <location>
        <begin position="4"/>
        <end position="8"/>
    </location>
</feature>
<feature type="strand" evidence="43">
    <location>
        <begin position="25"/>
        <end position="30"/>
    </location>
</feature>
<feature type="turn" evidence="43">
    <location>
        <begin position="33"/>
        <end position="35"/>
    </location>
</feature>
<feature type="strand" evidence="43">
    <location>
        <begin position="36"/>
        <end position="41"/>
    </location>
</feature>
<feature type="strand" evidence="43">
    <location>
        <begin position="44"/>
        <end position="49"/>
    </location>
</feature>
<feature type="helix" evidence="43">
    <location>
        <begin position="50"/>
        <end position="52"/>
    </location>
</feature>
<feature type="strand" evidence="43">
    <location>
        <begin position="53"/>
        <end position="55"/>
    </location>
</feature>
<feature type="strand" evidence="46">
    <location>
        <begin position="102"/>
        <end position="105"/>
    </location>
</feature>
<feature type="strand" evidence="46">
    <location>
        <begin position="113"/>
        <end position="115"/>
    </location>
</feature>
<feature type="strand" evidence="46">
    <location>
        <begin position="124"/>
        <end position="126"/>
    </location>
</feature>
<feature type="helix" evidence="46">
    <location>
        <begin position="130"/>
        <end position="132"/>
    </location>
</feature>
<feature type="strand" evidence="46">
    <location>
        <begin position="149"/>
        <end position="153"/>
    </location>
</feature>
<feature type="turn" evidence="46">
    <location>
        <begin position="161"/>
        <end position="164"/>
    </location>
</feature>
<feature type="strand" evidence="47">
    <location>
        <begin position="270"/>
        <end position="276"/>
    </location>
</feature>
<feature type="strand" evidence="44">
    <location>
        <begin position="283"/>
        <end position="285"/>
    </location>
</feature>
<feature type="strand" evidence="47">
    <location>
        <begin position="293"/>
        <end position="299"/>
    </location>
</feature>
<feature type="strand" evidence="45">
    <location>
        <begin position="301"/>
        <end position="303"/>
    </location>
</feature>
<feature type="strand" evidence="47">
    <location>
        <begin position="306"/>
        <end position="311"/>
    </location>
</feature>
<feature type="strand" evidence="47">
    <location>
        <begin position="314"/>
        <end position="319"/>
    </location>
</feature>
<feature type="helix" evidence="47">
    <location>
        <begin position="320"/>
        <end position="322"/>
    </location>
</feature>
<feature type="strand" evidence="47">
    <location>
        <begin position="323"/>
        <end position="325"/>
    </location>
</feature>
<feature type="helix" evidence="48">
    <location>
        <begin position="605"/>
        <end position="661"/>
    </location>
</feature>
<comment type="function">
    <text evidence="1 9 10 11 13 14 16 18 20 22 27 28 29">Adapter protein involved in regulating diverse signal transduction pathways. Involved in the regulation of endocytosis and lysosomal degradation of ligand-induced receptor tyrosine kinases, including EGFR and MET/hepatocyte growth factor receptor, through an association with CBL and endophilins. The association with CBL, and thus the receptor internalization, may be inhibited by an interaction with PDCD6IP and/or SPRY2. Involved in regulation of ligand-dependent endocytosis of the IgE receptor. Attenuates phosphatidylinositol 3-kinase activity by interaction with its regulatory subunit (By similarity). May be involved in regulation of cell adhesion; promotes the interaction between TTK2B and PDCD6IP. May be involved in the regulation of cellular stress response via the MAPK pathways through its interaction with MAP3K4. Is involved in modulation of tumor necrosis factor mediated apoptosis. Plays a role in the regulation of cell morphology and cytoskeletal organization. Required in the control of cell shape and migration. Has an essential role in the stimulation of B cell activation (PubMed:29636373).</text>
</comment>
<comment type="subunit">
    <text evidence="2 6 7 9 10 11 12 14 15 16 17 18 19 21 22 23 24 25 26 27">Can self-associate and form homotetramers. Interacts with CD2, F-actin capping protein, PIK3R3, GRB2, EGFR, MET, BLNK, MAP3K4, PDCD6IP, SPRY2, ARHGAP17, ARHGAP27, MAGI2, CRK, BCAR1, SOS1, ASAP1, ARAP3, HIP1R, SYNJ2, INPP5D and STAP1. Interacts with E3 ubiquitin-protein ligases CBL and CBLB, but does not interact with CBLC. Two molecules of SH3KBP1 seem to bind through their respective SH3 1 domain to one molecule of CBLB. The interaction with CBL or CBLB and EGFR is increased upon EGF stimulation. The interaction with CBL is attenuated by PDCD6IP. Interacts (via SH3 domains) with ARAP1 (PubMed:21275903). The interaction is independent of EGF and does not affect ARAP1 GTPase-activating activity but is involved in regulating ubiquitination and endocytic trafficking of EGFR (PubMed:21275903). ARAP1 competes with CBL for binding to SH3KBP1 and prevents interaction of CBL with SH3KBP1; this is likely to regulate SH3KBP1-mediated internalization of EGFR (By similarity). Interacts through its proline-rich region with the SH3 domain of endophilins SH3GL1, SH3GL2 and SH3GL3. The SH3KBP1-endophilin complex seems to associate with a complex containing the phosphorylated receptor (EGFR or MET) and phosphorylated CBL. Probably associates with ASAP1 and phosphorylated EGFR. Probably part of a complex consisting of at least SH3KBP1, ASAP1 and ARAP3. Interacts with focal adhesion kinases PTK2/FAK1 and PTK2B/PYK2, probably as a dimer. Interacts with DAB2 and probably associates with chathrin through its interaction with DAB2. Part of a complex consisting of SH3KBP1, DAB2, and clathrin heavy chain. DAB2 and clathrin dissociate from SH3KBP1 following growth factor treatment, enabling interaction with CBL. Interacts with DDN and probably associates with MAGI2 through its interaction with DDN. Interacts with the SH3 domains of SRC tyrosine-protein kinases SRC, LCK, LYN, FGR, FYN and HCK. Interacts with TRADD, BIRC2, TRAF1, TRAF2 and TNFR1, and the association with a TNFR1-associated complex upon stimulation with TNF-alpha seems to be mediated by SRC. Interacts (via SH3 domains) with SHKBP1 (via PXXXPR motifs) (By similarity). Interaction with CBL is abolished in the presence of SHKBP1 (By similarity). Interacts (via SH3 domains) with ZFP36 (via extreme C-terminal region) (PubMed:20221403). Interacts with MAP3K4; this interaction enhances the association with ZFP36 (PubMed:20221403).</text>
</comment>
<comment type="subunit">
    <text evidence="30">(Microbial infection) Interacts (via SH3 domains) with Chikungunya virus non-structural protein 3 (via C-terminus); this interaction plays a role in initiation of viral replication.</text>
</comment>
<comment type="interaction">
    <interactant intactId="EBI-346595">
        <id>Q96B97</id>
    </interactant>
    <interactant intactId="EBI-11954519">
        <id>Q49AR9</id>
        <label>ANKS1A</label>
    </interactant>
    <organismsDiffer>false</organismsDiffer>
    <experiments>3</experiments>
</comment>
<comment type="interaction">
    <interactant intactId="EBI-346595">
        <id>Q96B97</id>
    </interactant>
    <interactant intactId="EBI-4402732">
        <id>Q8WWN8</id>
        <label>ARAP3</label>
    </interactant>
    <organismsDiffer>false</organismsDiffer>
    <experiments>4</experiments>
</comment>
<comment type="interaction">
    <interactant intactId="EBI-346595">
        <id>Q96B97</id>
    </interactant>
    <interactant intactId="EBI-346622">
        <id>Q9ULH1</id>
        <label>ASAP1</label>
    </interactant>
    <organismsDiffer>false</organismsDiffer>
    <experiments>13</experiments>
</comment>
<comment type="interaction">
    <interactant intactId="EBI-346595">
        <id>Q96B97</id>
    </interactant>
    <interactant intactId="EBI-310968">
        <id>O43150</id>
        <label>ASAP2</label>
    </interactant>
    <organismsDiffer>false</organismsDiffer>
    <experiments>4</experiments>
</comment>
<comment type="interaction">
    <interactant intactId="EBI-346595">
        <id>Q96B97</id>
    </interactant>
    <interactant intactId="EBI-355586">
        <id>P52907</id>
        <label>CAPZA1</label>
    </interactant>
    <organismsDiffer>false</organismsDiffer>
    <experiments>7</experiments>
</comment>
<comment type="interaction">
    <interactant intactId="EBI-346595">
        <id>Q96B97</id>
    </interactant>
    <interactant intactId="EBI-518228">
        <id>P22681</id>
        <label>CBL</label>
    </interactant>
    <organismsDiffer>false</organismsDiffer>
    <experiments>21</experiments>
</comment>
<comment type="interaction">
    <interactant intactId="EBI-346595">
        <id>Q96B97</id>
    </interactant>
    <interactant intactId="EBI-744027">
        <id>Q13191</id>
        <label>CBLB</label>
    </interactant>
    <organismsDiffer>false</organismsDiffer>
    <experiments>22</experiments>
</comment>
<comment type="interaction">
    <interactant intactId="EBI-346595">
        <id>Q96B97</id>
    </interactant>
    <interactant intactId="EBI-10961624">
        <id>Q2TAC2-2</id>
        <label>CCDC57</label>
    </interactant>
    <organismsDiffer>false</organismsDiffer>
    <experiments>3</experiments>
</comment>
<comment type="interaction">
    <interactant intactId="EBI-346595">
        <id>Q96B97</id>
    </interactant>
    <interactant intactId="EBI-347573">
        <id>A6NC98</id>
        <label>CCDC88B</label>
    </interactant>
    <organismsDiffer>false</organismsDiffer>
    <experiments>3</experiments>
</comment>
<comment type="interaction">
    <interactant intactId="EBI-346595">
        <id>Q96B97</id>
    </interactant>
    <interactant intactId="EBI-3912464">
        <id>P06729</id>
        <label>CD2</label>
    </interactant>
    <organismsDiffer>false</organismsDiffer>
    <experiments>3</experiments>
</comment>
<comment type="interaction">
    <interactant intactId="EBI-346595">
        <id>Q96B97</id>
    </interactant>
    <interactant intactId="EBI-298152">
        <id>Q9Y5K6</id>
        <label>CD2AP</label>
    </interactant>
    <organismsDiffer>false</organismsDiffer>
    <experiments>6</experiments>
</comment>
<comment type="interaction">
    <interactant intactId="EBI-346595">
        <id>Q96B97</id>
    </interactant>
    <interactant intactId="EBI-3867333">
        <id>A8MQ03</id>
        <label>CYSRT1</label>
    </interactant>
    <organismsDiffer>false</organismsDiffer>
    <experiments>3</experiments>
</comment>
<comment type="interaction">
    <interactant intactId="EBI-346595">
        <id>Q96B97</id>
    </interactant>
    <interactant intactId="EBI-5240523">
        <id>O94850</id>
        <label>DDN</label>
    </interactant>
    <organismsDiffer>false</organismsDiffer>
    <experiments>5</experiments>
</comment>
<comment type="interaction">
    <interactant intactId="EBI-346595">
        <id>Q96B97</id>
    </interactant>
    <interactant intactId="EBI-13305669">
        <id>Q9ULE3-2</id>
        <label>DENND2A</label>
    </interactant>
    <organismsDiffer>false</organismsDiffer>
    <experiments>3</experiments>
</comment>
<comment type="interaction">
    <interactant intactId="EBI-346595">
        <id>Q96B97</id>
    </interactant>
    <interactant intactId="EBI-346547">
        <id>P50570</id>
        <label>DNM2</label>
    </interactant>
    <organismsDiffer>false</organismsDiffer>
    <experiments>5</experiments>
</comment>
<comment type="interaction">
    <interactant intactId="EBI-346595">
        <id>Q96B97</id>
    </interactant>
    <interactant intactId="EBI-10259069">
        <id>Q86UU5</id>
        <label>GGN</label>
    </interactant>
    <organismsDiffer>false</organismsDiffer>
    <experiments>3</experiments>
</comment>
<comment type="interaction">
    <interactant intactId="EBI-346595">
        <id>Q96B97</id>
    </interactant>
    <interactant intactId="EBI-11519926">
        <id>Q6PI77</id>
        <label>GPRASP3</label>
    </interactant>
    <organismsDiffer>false</organismsDiffer>
    <experiments>5</experiments>
</comment>
<comment type="interaction">
    <interactant intactId="EBI-346595">
        <id>Q96B97</id>
    </interactant>
    <interactant intactId="EBI-1380477">
        <id>Q92835</id>
        <label>INPP5D</label>
    </interactant>
    <organismsDiffer>false</organismsDiffer>
    <experiments>6</experiments>
</comment>
<comment type="interaction">
    <interactant intactId="EBI-346595">
        <id>Q96B97</id>
    </interactant>
    <interactant intactId="EBI-10975473">
        <id>O60333-2</id>
        <label>KIF1B</label>
    </interactant>
    <organismsDiffer>false</organismsDiffer>
    <experiments>3</experiments>
</comment>
<comment type="interaction">
    <interactant intactId="EBI-346595">
        <id>Q96B97</id>
    </interactant>
    <interactant intactId="EBI-10981970">
        <id>Q5T749</id>
        <label>KPRP</label>
    </interactant>
    <organismsDiffer>false</organismsDiffer>
    <experiments>5</experiments>
</comment>
<comment type="interaction">
    <interactant intactId="EBI-346595">
        <id>Q96B97</id>
    </interactant>
    <interactant intactId="EBI-22311199">
        <id>Q3LI67</id>
        <label>KRTAP6-3</label>
    </interactant>
    <organismsDiffer>false</organismsDiffer>
    <experiments>3</experiments>
</comment>
<comment type="interaction">
    <interactant intactId="EBI-346595">
        <id>Q96B97</id>
    </interactant>
    <interactant intactId="EBI-741037">
        <id>Q9BRK4</id>
        <label>LZTS2</label>
    </interactant>
    <organismsDiffer>false</organismsDiffer>
    <experiments>3</experiments>
</comment>
<comment type="interaction">
    <interactant intactId="EBI-346595">
        <id>Q96B97</id>
    </interactant>
    <interactant intactId="EBI-448104">
        <id>Q9Y6R4</id>
        <label>MAP3K4</label>
    </interactant>
    <organismsDiffer>false</organismsDiffer>
    <experiments>5</experiments>
</comment>
<comment type="interaction">
    <interactant intactId="EBI-346595">
        <id>Q96B97</id>
    </interactant>
    <interactant intactId="EBI-5461341">
        <id>Q9H3P2</id>
        <label>NELFA</label>
    </interactant>
    <organismsDiffer>false</organismsDiffer>
    <experiments>3</experiments>
</comment>
<comment type="interaction">
    <interactant intactId="EBI-346595">
        <id>Q96B97</id>
    </interactant>
    <interactant intactId="EBI-395883">
        <id>P07237</id>
        <label>P4HB</label>
    </interactant>
    <organismsDiffer>false</organismsDiffer>
    <experiments>3</experiments>
</comment>
<comment type="interaction">
    <interactant intactId="EBI-346595">
        <id>Q96B97</id>
    </interactant>
    <interactant intactId="EBI-395357">
        <id>P53803</id>
        <label>POLR2K</label>
    </interactant>
    <organismsDiffer>false</organismsDiffer>
    <experiments>3</experiments>
</comment>
<comment type="interaction">
    <interactant intactId="EBI-346595">
        <id>Q96B97</id>
    </interactant>
    <interactant intactId="EBI-396669">
        <id>Q9Y3C5</id>
        <label>RNF11</label>
    </interactant>
    <organismsDiffer>false</organismsDiffer>
    <experiments>3</experiments>
</comment>
<comment type="interaction">
    <interactant intactId="EBI-346595">
        <id>Q96B97</id>
    </interactant>
    <interactant intactId="EBI-727062">
        <id>P78314</id>
        <label>SH3BP2</label>
    </interactant>
    <organismsDiffer>false</organismsDiffer>
    <experiments>8</experiments>
</comment>
<comment type="interaction">
    <interactant intactId="EBI-346595">
        <id>Q96B97</id>
    </interactant>
    <interactant intactId="EBI-77938">
        <id>Q99962</id>
        <label>SH3GL2</label>
    </interactant>
    <organismsDiffer>false</organismsDiffer>
    <experiments>2</experiments>
</comment>
<comment type="interaction">
    <interactant intactId="EBI-346595">
        <id>Q96B97</id>
    </interactant>
    <interactant intactId="EBI-742487">
        <id>O43597</id>
        <label>SPRY2</label>
    </interactant>
    <organismsDiffer>false</organismsDiffer>
    <experiments>2</experiments>
</comment>
<comment type="interaction">
    <interactant intactId="EBI-346595">
        <id>Q96B97</id>
    </interactant>
    <interactant intactId="EBI-307104">
        <id>Q13501</id>
        <label>SQSTM1</label>
    </interactant>
    <organismsDiffer>false</organismsDiffer>
    <experiments>4</experiments>
</comment>
<comment type="interaction">
    <interactant intactId="EBI-346595">
        <id>Q96B97</id>
    </interactant>
    <interactant intactId="EBI-6083058">
        <id>Q9ULZ2</id>
        <label>STAP1</label>
    </interactant>
    <organismsDiffer>false</organismsDiffer>
    <experiments>7</experiments>
</comment>
<comment type="interaction">
    <interactant intactId="EBI-346595">
        <id>Q96B97</id>
    </interactant>
    <interactant intactId="EBI-310513">
        <id>O15056</id>
        <label>SYNJ2</label>
    </interactant>
    <organismsDiffer>false</organismsDiffer>
    <experiments>6</experiments>
</comment>
<comment type="interaction">
    <interactant intactId="EBI-346595">
        <id>Q96B97</id>
    </interactant>
    <interactant intactId="EBI-11952721">
        <id>Q05BL1</id>
        <label>TP53BP2</label>
    </interactant>
    <organismsDiffer>false</organismsDiffer>
    <experiments>3</experiments>
</comment>
<comment type="interaction">
    <interactant intactId="EBI-346595">
        <id>Q96B97</id>
    </interactant>
    <interactant intactId="EBI-3390054">
        <id>P0CG48</id>
        <label>UBC</label>
    </interactant>
    <organismsDiffer>false</organismsDiffer>
    <experiments>6</experiments>
</comment>
<comment type="interaction">
    <interactant intactId="EBI-346595">
        <id>Q96B97</id>
    </interactant>
    <interactant intactId="EBI-720609">
        <id>O76024</id>
        <label>WFS1</label>
    </interactant>
    <organismsDiffer>false</organismsDiffer>
    <experiments>3</experiments>
</comment>
<comment type="interaction">
    <interactant intactId="EBI-346595">
        <id>Q96B97</id>
    </interactant>
    <interactant intactId="EBI-11522250">
        <id>O15156-2</id>
        <label>ZBTB7B</label>
    </interactant>
    <organismsDiffer>false</organismsDiffer>
    <experiments>3</experiments>
</comment>
<comment type="interaction">
    <interactant intactId="EBI-346595">
        <id>Q96B97</id>
    </interactant>
    <interactant intactId="EBI-9088990">
        <id>Q7Z783</id>
    </interactant>
    <organismsDiffer>false</organismsDiffer>
    <experiments>3</experiments>
</comment>
<comment type="interaction">
    <interactant intactId="EBI-346595">
        <id>Q96B97</id>
    </interactant>
    <interactant intactId="EBI-1391846">
        <id>P98078</id>
        <label>Dab2</label>
    </interactant>
    <organismsDiffer>true</organismsDiffer>
    <experiments>9</experiments>
</comment>
<comment type="interaction">
    <interactant intactId="EBI-346595">
        <id>Q96B97</id>
    </interactant>
    <interactant intactId="EBI-349613">
        <id>P39052</id>
        <label>Dnm2</label>
    </interactant>
    <organismsDiffer>true</organismsDiffer>
    <experiments>4</experiments>
</comment>
<comment type="interaction">
    <interactant intactId="EBI-346595">
        <id>Q96B97</id>
    </interactant>
    <interactant intactId="EBI-642457">
        <id>Q9JKY5</id>
        <label>Hip1r</label>
    </interactant>
    <organismsDiffer>true</organismsDiffer>
    <experiments>3</experiments>
</comment>
<comment type="interaction">
    <interactant intactId="EBI-7585212">
        <id>Q96B97-1</id>
    </interactant>
    <interactant intactId="EBI-15555129">
        <id>Q13191-1</id>
        <label>CBLB</label>
    </interactant>
    <organismsDiffer>false</organismsDiffer>
    <experiments>3</experiments>
</comment>
<comment type="subcellular location">
    <subcellularLocation>
        <location evidence="26">Cytoplasm</location>
    </subcellularLocation>
    <subcellularLocation>
        <location>Cytoplasm</location>
        <location>Cytoskeleton</location>
    </subcellularLocation>
    <subcellularLocation>
        <location>Cytoplasmic vesicle membrane</location>
        <topology>Peripheral membrane protein</topology>
    </subcellularLocation>
    <subcellularLocation>
        <location>Synapse</location>
        <location>Synaptosome</location>
    </subcellularLocation>
    <subcellularLocation>
        <location evidence="1">Cell junction</location>
        <location evidence="1">Focal adhesion</location>
    </subcellularLocation>
    <text evidence="2 26">Localized in endocytic vesicles containing clustered receptors. Colocalizes with ASAP1 in vesicular structures. Colocalized with actin microfilaments and focal adhesions (By similarity). Colocalized with MAGI2 in synaptosomes. Translocation to EGFR containing vesicles upon EGF stimulation is inhibited in the presence of SH3KBP1 (By similarity). Colocalizes with ZFP36 in the cytoplasm (PubMed:20221403).</text>
</comment>
<comment type="alternative products">
    <event type="alternative splicing"/>
    <isoform>
        <id>Q96B97-1</id>
        <name>1</name>
        <sequence type="displayed"/>
    </isoform>
    <isoform>
        <id>Q96B97-2</id>
        <name>2</name>
        <sequence type="described" ref="VSP_007504"/>
    </isoform>
    <isoform>
        <id>Q96B97-3</id>
        <name>3</name>
        <sequence type="described" ref="VSP_044655 VSP_044656"/>
    </isoform>
</comment>
<comment type="tissue specificity">
    <text>Ubiquitously expressed. Also expressed in some cancer cell lines.</text>
</comment>
<comment type="PTM">
    <text>Monoubiquitinated by CBL and CBLB after EGF stimulation; probably on its C-terminus.</text>
</comment>
<comment type="disease" evidence="29">
    <disease id="DI-05546">
        <name>Immunodeficiency 61</name>
        <acronym>IMD61</acronym>
        <description>An X-linked recessive primary immunologic disorder characterized by recurrent infections due to impaired antibody production. Affected individuals have normal numbers of circulating B and T cells, but B cells have an intrinsic defect in antibody production. Disease severity is variable and onset is in early childhood.</description>
        <dbReference type="MIM" id="300310"/>
    </disease>
    <text>The disease may be caused by variants affecting the gene represented in this entry.</text>
</comment>
<comment type="miscellaneous">
    <molecule>Isoform 1</molecule>
    <text>Interacts with CBL.</text>
</comment>
<comment type="miscellaneous">
    <molecule>Isoform 2</molecule>
    <text evidence="33">Interacts with CD2 cytoplasmic tail and does not interact with F-actin.</text>
</comment>
<comment type="sequence caution" evidence="33">
    <conflict type="miscellaneous discrepancy">
        <sequence resource="EMBL-CDS" id="AAH50663"/>
    </conflict>
    <text>Contaminating sequence. Potential poly-A sequence.</text>
</comment>
<organism>
    <name type="scientific">Homo sapiens</name>
    <name type="common">Human</name>
    <dbReference type="NCBI Taxonomy" id="9606"/>
    <lineage>
        <taxon>Eukaryota</taxon>
        <taxon>Metazoa</taxon>
        <taxon>Chordata</taxon>
        <taxon>Craniata</taxon>
        <taxon>Vertebrata</taxon>
        <taxon>Euteleostomi</taxon>
        <taxon>Mammalia</taxon>
        <taxon>Eutheria</taxon>
        <taxon>Euarchontoglires</taxon>
        <taxon>Primates</taxon>
        <taxon>Haplorrhini</taxon>
        <taxon>Catarrhini</taxon>
        <taxon>Hominidae</taxon>
        <taxon>Homo</taxon>
    </lineage>
</organism>
<dbReference type="EMBL" id="AF230904">
    <property type="protein sequence ID" value="AAF37854.1"/>
    <property type="molecule type" value="mRNA"/>
</dbReference>
<dbReference type="EMBL" id="AF542051">
    <property type="protein sequence ID" value="AAN77231.1"/>
    <property type="molecule type" value="mRNA"/>
</dbReference>
<dbReference type="EMBL" id="AK293234">
    <property type="protein sequence ID" value="BAH11470.1"/>
    <property type="molecule type" value="mRNA"/>
</dbReference>
<dbReference type="EMBL" id="AK293237">
    <property type="protein sequence ID" value="BAH11471.1"/>
    <property type="molecule type" value="mRNA"/>
</dbReference>
<dbReference type="EMBL" id="AL732423">
    <property type="status" value="NOT_ANNOTATED_CDS"/>
    <property type="molecule type" value="Genomic_DNA"/>
</dbReference>
<dbReference type="EMBL" id="AL732327">
    <property type="status" value="NOT_ANNOTATED_CDS"/>
    <property type="molecule type" value="Genomic_DNA"/>
</dbReference>
<dbReference type="EMBL" id="AL732325">
    <property type="status" value="NOT_ANNOTATED_CDS"/>
    <property type="molecule type" value="Genomic_DNA"/>
</dbReference>
<dbReference type="EMBL" id="AL732409">
    <property type="status" value="NOT_ANNOTATED_CDS"/>
    <property type="molecule type" value="Genomic_DNA"/>
</dbReference>
<dbReference type="EMBL" id="AL772197">
    <property type="status" value="NOT_ANNOTATED_CDS"/>
    <property type="molecule type" value="Genomic_DNA"/>
</dbReference>
<dbReference type="EMBL" id="BC015806">
    <property type="protein sequence ID" value="AAH15806.1"/>
    <property type="molecule type" value="mRNA"/>
</dbReference>
<dbReference type="EMBL" id="BC050663">
    <property type="protein sequence ID" value="AAH50663.1"/>
    <property type="status" value="ALT_SEQ"/>
    <property type="molecule type" value="mRNA"/>
</dbReference>
<dbReference type="EMBL" id="AF329267">
    <property type="protein sequence ID" value="AAK95587.1"/>
    <property type="molecule type" value="mRNA"/>
</dbReference>
<dbReference type="EMBL" id="AF329268">
    <property type="protein sequence ID" value="AAO13348.1"/>
    <property type="molecule type" value="mRNA"/>
</dbReference>
<dbReference type="CCDS" id="CCDS14193.1">
    <molecule id="Q96B97-1"/>
</dbReference>
<dbReference type="CCDS" id="CCDS35213.1">
    <molecule id="Q96B97-2"/>
</dbReference>
<dbReference type="CCDS" id="CCDS55383.1">
    <molecule id="Q96B97-3"/>
</dbReference>
<dbReference type="PIR" id="JC7191">
    <property type="entry name" value="JC7191"/>
</dbReference>
<dbReference type="RefSeq" id="NP_001019837.1">
    <molecule id="Q96B97-2"/>
    <property type="nucleotide sequence ID" value="NM_001024666.3"/>
</dbReference>
<dbReference type="RefSeq" id="NP_001171889.1">
    <molecule id="Q96B97-3"/>
    <property type="nucleotide sequence ID" value="NM_001184960.2"/>
</dbReference>
<dbReference type="RefSeq" id="NP_114098.1">
    <molecule id="Q96B97-1"/>
    <property type="nucleotide sequence ID" value="NM_031892.3"/>
</dbReference>
<dbReference type="RefSeq" id="XP_016884958.1">
    <property type="nucleotide sequence ID" value="XM_017029469.1"/>
</dbReference>
<dbReference type="PDB" id="2BZ8">
    <property type="method" value="X-ray"/>
    <property type="resolution" value="2.00 A"/>
    <property type="chains" value="A/B=1-58"/>
</dbReference>
<dbReference type="PDB" id="2K6D">
    <property type="method" value="NMR"/>
    <property type="chains" value="A=267-328"/>
</dbReference>
<dbReference type="PDB" id="2K9G">
    <property type="method" value="NMR"/>
    <property type="chains" value="A=262-333"/>
</dbReference>
<dbReference type="PDB" id="2N64">
    <property type="method" value="NMR"/>
    <property type="chains" value="A/B/C=594-665"/>
</dbReference>
<dbReference type="PDB" id="2O2O">
    <property type="method" value="NMR"/>
    <property type="chains" value="A=92-168"/>
</dbReference>
<dbReference type="PDB" id="2YDL">
    <property type="method" value="X-ray"/>
    <property type="resolution" value="2.05 A"/>
    <property type="chains" value="A=270-328"/>
</dbReference>
<dbReference type="PDB" id="5ABS">
    <property type="method" value="X-ray"/>
    <property type="resolution" value="1.74 A"/>
    <property type="chains" value="A=599-662"/>
</dbReference>
<dbReference type="PDBsum" id="2BZ8"/>
<dbReference type="PDBsum" id="2K6D"/>
<dbReference type="PDBsum" id="2K9G"/>
<dbReference type="PDBsum" id="2N64"/>
<dbReference type="PDBsum" id="2O2O"/>
<dbReference type="PDBsum" id="2YDL"/>
<dbReference type="PDBsum" id="5ABS"/>
<dbReference type="SMR" id="Q96B97"/>
<dbReference type="BioGRID" id="119029">
    <property type="interactions" value="373"/>
</dbReference>
<dbReference type="CORUM" id="Q96B97"/>
<dbReference type="DIP" id="DIP-31803N"/>
<dbReference type="FunCoup" id="Q96B97">
    <property type="interactions" value="1624"/>
</dbReference>
<dbReference type="IntAct" id="Q96B97">
    <property type="interactions" value="146"/>
</dbReference>
<dbReference type="MINT" id="Q96B97"/>
<dbReference type="STRING" id="9606.ENSP00000380921"/>
<dbReference type="GlyCosmos" id="Q96B97">
    <property type="glycosylation" value="2 sites, 1 glycan"/>
</dbReference>
<dbReference type="GlyGen" id="Q96B97">
    <property type="glycosylation" value="9 sites, 3 N-linked glycans (2 sites), 1 O-linked glycan (7 sites)"/>
</dbReference>
<dbReference type="iPTMnet" id="Q96B97"/>
<dbReference type="MetOSite" id="Q96B97"/>
<dbReference type="PhosphoSitePlus" id="Q96B97"/>
<dbReference type="BioMuta" id="SH3KBP1"/>
<dbReference type="DMDM" id="31077034"/>
<dbReference type="jPOST" id="Q96B97"/>
<dbReference type="MassIVE" id="Q96B97"/>
<dbReference type="PaxDb" id="9606-ENSP00000380921"/>
<dbReference type="PeptideAtlas" id="Q96B97"/>
<dbReference type="ProteomicsDB" id="63029"/>
<dbReference type="ProteomicsDB" id="76057">
    <molecule id="Q96B97-1"/>
</dbReference>
<dbReference type="ProteomicsDB" id="76058">
    <molecule id="Q96B97-2"/>
</dbReference>
<dbReference type="Pumba" id="Q96B97"/>
<dbReference type="Antibodypedia" id="521">
    <property type="antibodies" value="213 antibodies from 32 providers"/>
</dbReference>
<dbReference type="DNASU" id="30011"/>
<dbReference type="Ensembl" id="ENST00000379698.8">
    <molecule id="Q96B97-2"/>
    <property type="protein sequence ID" value="ENSP00000369020.4"/>
    <property type="gene ID" value="ENSG00000147010.19"/>
</dbReference>
<dbReference type="Ensembl" id="ENST00000379716.5">
    <molecule id="Q96B97-3"/>
    <property type="protein sequence ID" value="ENSP00000369039.1"/>
    <property type="gene ID" value="ENSG00000147010.19"/>
</dbReference>
<dbReference type="Ensembl" id="ENST00000397821.8">
    <molecule id="Q96B97-1"/>
    <property type="protein sequence ID" value="ENSP00000380921.3"/>
    <property type="gene ID" value="ENSG00000147010.19"/>
</dbReference>
<dbReference type="Ensembl" id="ENST00000699723.1">
    <molecule id="Q96B97-2"/>
    <property type="protein sequence ID" value="ENSP00000514545.1"/>
    <property type="gene ID" value="ENSG00000147010.19"/>
</dbReference>
<dbReference type="GeneID" id="30011"/>
<dbReference type="KEGG" id="hsa:30011"/>
<dbReference type="MANE-Select" id="ENST00000397821.8">
    <property type="protein sequence ID" value="ENSP00000380921.3"/>
    <property type="RefSeq nucleotide sequence ID" value="NM_031892.3"/>
    <property type="RefSeq protein sequence ID" value="NP_114098.1"/>
</dbReference>
<dbReference type="UCSC" id="uc004czl.4">
    <molecule id="Q96B97-1"/>
    <property type="organism name" value="human"/>
</dbReference>
<dbReference type="AGR" id="HGNC:13867"/>
<dbReference type="CTD" id="30011"/>
<dbReference type="DisGeNET" id="30011"/>
<dbReference type="GeneCards" id="SH3KBP1"/>
<dbReference type="HGNC" id="HGNC:13867">
    <property type="gene designation" value="SH3KBP1"/>
</dbReference>
<dbReference type="HPA" id="ENSG00000147010">
    <property type="expression patterns" value="Low tissue specificity"/>
</dbReference>
<dbReference type="MalaCards" id="SH3KBP1"/>
<dbReference type="MIM" id="300310">
    <property type="type" value="phenotype"/>
</dbReference>
<dbReference type="MIM" id="300374">
    <property type="type" value="gene"/>
</dbReference>
<dbReference type="neXtProt" id="NX_Q96B97"/>
<dbReference type="OpenTargets" id="ENSG00000147010"/>
<dbReference type="PharmGKB" id="PA37822"/>
<dbReference type="VEuPathDB" id="HostDB:ENSG00000147010"/>
<dbReference type="eggNOG" id="KOG4348">
    <property type="taxonomic scope" value="Eukaryota"/>
</dbReference>
<dbReference type="GeneTree" id="ENSGT00940000155886"/>
<dbReference type="HOGENOM" id="CLU_024255_1_0_1"/>
<dbReference type="InParanoid" id="Q96B97"/>
<dbReference type="OMA" id="PNSCHRS"/>
<dbReference type="OrthoDB" id="5340910at2759"/>
<dbReference type="PAN-GO" id="Q96B97">
    <property type="GO annotations" value="2 GO annotations based on evolutionary models"/>
</dbReference>
<dbReference type="PhylomeDB" id="Q96B97"/>
<dbReference type="TreeFam" id="TF350191"/>
<dbReference type="PathwayCommons" id="Q96B97"/>
<dbReference type="Reactome" id="R-HSA-182971">
    <property type="pathway name" value="EGFR downregulation"/>
</dbReference>
<dbReference type="Reactome" id="R-HSA-6807004">
    <property type="pathway name" value="Negative regulation of MET activity"/>
</dbReference>
<dbReference type="Reactome" id="R-HSA-8856825">
    <property type="pathway name" value="Cargo recognition for clathrin-mediated endocytosis"/>
</dbReference>
<dbReference type="Reactome" id="R-HSA-8856828">
    <property type="pathway name" value="Clathrin-mediated endocytosis"/>
</dbReference>
<dbReference type="Reactome" id="R-HSA-8866376">
    <property type="pathway name" value="Reelin signalling pathway"/>
</dbReference>
<dbReference type="Reactome" id="R-HSA-8875360">
    <property type="pathway name" value="InlB-mediated entry of Listeria monocytogenes into host cell"/>
</dbReference>
<dbReference type="Reactome" id="R-HSA-9679191">
    <property type="pathway name" value="Potential therapeutics for SARS"/>
</dbReference>
<dbReference type="Reactome" id="R-HSA-983695">
    <property type="pathway name" value="Antigen activates B Cell Receptor (BCR) leading to generation of second messengers"/>
</dbReference>
<dbReference type="SignaLink" id="Q96B97"/>
<dbReference type="SIGNOR" id="Q96B97"/>
<dbReference type="BioGRID-ORCS" id="30011">
    <property type="hits" value="14 hits in 774 CRISPR screens"/>
</dbReference>
<dbReference type="CD-CODE" id="F345034F">
    <property type="entry name" value="Signaling cluster"/>
</dbReference>
<dbReference type="ChiTaRS" id="SH3KBP1">
    <property type="organism name" value="human"/>
</dbReference>
<dbReference type="EvolutionaryTrace" id="Q96B97"/>
<dbReference type="GeneWiki" id="SH3KBP1"/>
<dbReference type="GenomeRNAi" id="30011"/>
<dbReference type="Pharos" id="Q96B97">
    <property type="development level" value="Tbio"/>
</dbReference>
<dbReference type="PRO" id="PR:Q96B97"/>
<dbReference type="Proteomes" id="UP000005640">
    <property type="component" value="Chromosome X"/>
</dbReference>
<dbReference type="RNAct" id="Q96B97">
    <property type="molecule type" value="protein"/>
</dbReference>
<dbReference type="Bgee" id="ENSG00000147010">
    <property type="expression patterns" value="Expressed in secondary oocyte and 190 other cell types or tissues"/>
</dbReference>
<dbReference type="ExpressionAtlas" id="Q96B97">
    <property type="expression patterns" value="baseline and differential"/>
</dbReference>
<dbReference type="GO" id="GO:0005911">
    <property type="term" value="C:cell-cell junction"/>
    <property type="evidence" value="ECO:0007669"/>
    <property type="project" value="Ensembl"/>
</dbReference>
<dbReference type="GO" id="GO:0005737">
    <property type="term" value="C:cytoplasm"/>
    <property type="evidence" value="ECO:0000314"/>
    <property type="project" value="UniProtKB"/>
</dbReference>
<dbReference type="GO" id="GO:0030659">
    <property type="term" value="C:cytoplasmic vesicle membrane"/>
    <property type="evidence" value="ECO:0007669"/>
    <property type="project" value="UniProtKB-SubCell"/>
</dbReference>
<dbReference type="GO" id="GO:0005856">
    <property type="term" value="C:cytoskeleton"/>
    <property type="evidence" value="ECO:0007669"/>
    <property type="project" value="UniProtKB-SubCell"/>
</dbReference>
<dbReference type="GO" id="GO:0005829">
    <property type="term" value="C:cytosol"/>
    <property type="evidence" value="ECO:0000304"/>
    <property type="project" value="Reactome"/>
</dbReference>
<dbReference type="GO" id="GO:0030139">
    <property type="term" value="C:endocytic vesicle"/>
    <property type="evidence" value="ECO:0000250"/>
    <property type="project" value="UniProtKB"/>
</dbReference>
<dbReference type="GO" id="GO:0005925">
    <property type="term" value="C:focal adhesion"/>
    <property type="evidence" value="ECO:0007669"/>
    <property type="project" value="UniProtKB-SubCell"/>
</dbReference>
<dbReference type="GO" id="GO:0098982">
    <property type="term" value="C:GABA-ergic synapse"/>
    <property type="evidence" value="ECO:0007669"/>
    <property type="project" value="Ensembl"/>
</dbReference>
<dbReference type="GO" id="GO:0098978">
    <property type="term" value="C:glutamatergic synapse"/>
    <property type="evidence" value="ECO:0007669"/>
    <property type="project" value="Ensembl"/>
</dbReference>
<dbReference type="GO" id="GO:0043005">
    <property type="term" value="C:neuron projection"/>
    <property type="evidence" value="ECO:0007669"/>
    <property type="project" value="UniProtKB-KW"/>
</dbReference>
<dbReference type="GO" id="GO:0005886">
    <property type="term" value="C:plasma membrane"/>
    <property type="evidence" value="ECO:0000304"/>
    <property type="project" value="Reactome"/>
</dbReference>
<dbReference type="GO" id="GO:0014069">
    <property type="term" value="C:postsynaptic density"/>
    <property type="evidence" value="ECO:0007669"/>
    <property type="project" value="Ensembl"/>
</dbReference>
<dbReference type="GO" id="GO:0017124">
    <property type="term" value="F:SH3 domain binding"/>
    <property type="evidence" value="ECO:0007669"/>
    <property type="project" value="UniProtKB-KW"/>
</dbReference>
<dbReference type="GO" id="GO:0031625">
    <property type="term" value="F:ubiquitin protein ligase binding"/>
    <property type="evidence" value="ECO:0007669"/>
    <property type="project" value="Ensembl"/>
</dbReference>
<dbReference type="GO" id="GO:0007015">
    <property type="term" value="P:actin filament organization"/>
    <property type="evidence" value="ECO:0000318"/>
    <property type="project" value="GO_Central"/>
</dbReference>
<dbReference type="GO" id="GO:0006915">
    <property type="term" value="P:apoptotic process"/>
    <property type="evidence" value="ECO:0007669"/>
    <property type="project" value="UniProtKB-KW"/>
</dbReference>
<dbReference type="GO" id="GO:0016477">
    <property type="term" value="P:cell migration"/>
    <property type="evidence" value="ECO:0000315"/>
    <property type="project" value="UniProtKB"/>
</dbReference>
<dbReference type="GO" id="GO:0007267">
    <property type="term" value="P:cell-cell signaling"/>
    <property type="evidence" value="ECO:0000303"/>
    <property type="project" value="UniProtKB"/>
</dbReference>
<dbReference type="GO" id="GO:0007010">
    <property type="term" value="P:cytoskeleton organization"/>
    <property type="evidence" value="ECO:0000315"/>
    <property type="project" value="UniProtKB"/>
</dbReference>
<dbReference type="GO" id="GO:0006897">
    <property type="term" value="P:endocytosis"/>
    <property type="evidence" value="ECO:0007669"/>
    <property type="project" value="UniProtKB-KW"/>
</dbReference>
<dbReference type="GO" id="GO:0050871">
    <property type="term" value="P:positive regulation of B cell activation"/>
    <property type="evidence" value="ECO:0000315"/>
    <property type="project" value="UniProtKB"/>
</dbReference>
<dbReference type="GO" id="GO:0008360">
    <property type="term" value="P:regulation of cell shape"/>
    <property type="evidence" value="ECO:0000315"/>
    <property type="project" value="UniProtKB"/>
</dbReference>
<dbReference type="CDD" id="cd12052">
    <property type="entry name" value="SH3_CIN85_1"/>
    <property type="match status" value="1"/>
</dbReference>
<dbReference type="CDD" id="cd12055">
    <property type="entry name" value="SH3_CIN85_2"/>
    <property type="match status" value="1"/>
</dbReference>
<dbReference type="CDD" id="cd12057">
    <property type="entry name" value="SH3_CIN85_3"/>
    <property type="match status" value="1"/>
</dbReference>
<dbReference type="FunFam" id="2.30.30.40:FF:000089">
    <property type="entry name" value="SH3 domain-containing kinase-binding protein 1"/>
    <property type="match status" value="1"/>
</dbReference>
<dbReference type="FunFam" id="2.30.30.40:FF:000094">
    <property type="entry name" value="SH3 domain-containing kinase-binding protein 1"/>
    <property type="match status" value="1"/>
</dbReference>
<dbReference type="FunFam" id="2.30.30.40:FF:000112">
    <property type="entry name" value="SH3 domain-containing kinase-binding protein 1"/>
    <property type="match status" value="1"/>
</dbReference>
<dbReference type="Gene3D" id="2.30.30.40">
    <property type="entry name" value="SH3 Domains"/>
    <property type="match status" value="3"/>
</dbReference>
<dbReference type="InterPro" id="IPR035770">
    <property type="entry name" value="CIN85_SH3_1"/>
</dbReference>
<dbReference type="InterPro" id="IPR035771">
    <property type="entry name" value="CIN85_SH3_2"/>
</dbReference>
<dbReference type="InterPro" id="IPR035772">
    <property type="entry name" value="CIN85_SH3_3"/>
</dbReference>
<dbReference type="InterPro" id="IPR050384">
    <property type="entry name" value="Endophilin_SH3RF"/>
</dbReference>
<dbReference type="InterPro" id="IPR036028">
    <property type="entry name" value="SH3-like_dom_sf"/>
</dbReference>
<dbReference type="InterPro" id="IPR001452">
    <property type="entry name" value="SH3_domain"/>
</dbReference>
<dbReference type="PANTHER" id="PTHR14167">
    <property type="entry name" value="SH3 DOMAIN-CONTAINING"/>
    <property type="match status" value="1"/>
</dbReference>
<dbReference type="PANTHER" id="PTHR14167:SF6">
    <property type="entry name" value="SH3 DOMAIN-CONTAINING KINASE-BINDING PROTEIN 1"/>
    <property type="match status" value="1"/>
</dbReference>
<dbReference type="Pfam" id="PF14604">
    <property type="entry name" value="SH3_9"/>
    <property type="match status" value="3"/>
</dbReference>
<dbReference type="PRINTS" id="PR00499">
    <property type="entry name" value="P67PHOX"/>
</dbReference>
<dbReference type="PRINTS" id="PR00452">
    <property type="entry name" value="SH3DOMAIN"/>
</dbReference>
<dbReference type="SMART" id="SM00326">
    <property type="entry name" value="SH3"/>
    <property type="match status" value="3"/>
</dbReference>
<dbReference type="SUPFAM" id="SSF50044">
    <property type="entry name" value="SH3-domain"/>
    <property type="match status" value="3"/>
</dbReference>
<dbReference type="PROSITE" id="PS50002">
    <property type="entry name" value="SH3"/>
    <property type="match status" value="3"/>
</dbReference>
<proteinExistence type="evidence at protein level"/>
<evidence type="ECO:0000250" key="1"/>
<evidence type="ECO:0000250" key="2">
    <source>
        <dbReference type="UniProtKB" id="Q8R550"/>
    </source>
</evidence>
<evidence type="ECO:0000255" key="3"/>
<evidence type="ECO:0000255" key="4">
    <source>
        <dbReference type="PROSITE-ProRule" id="PRU00192"/>
    </source>
</evidence>
<evidence type="ECO:0000256" key="5">
    <source>
        <dbReference type="SAM" id="MobiDB-lite"/>
    </source>
</evidence>
<evidence type="ECO:0000269" key="6">
    <source>
    </source>
</evidence>
<evidence type="ECO:0000269" key="7">
    <source>
    </source>
</evidence>
<evidence type="ECO:0000269" key="8">
    <source>
    </source>
</evidence>
<evidence type="ECO:0000269" key="9">
    <source>
    </source>
</evidence>
<evidence type="ECO:0000269" key="10">
    <source>
    </source>
</evidence>
<evidence type="ECO:0000269" key="11">
    <source>
    </source>
</evidence>
<evidence type="ECO:0000269" key="12">
    <source>
    </source>
</evidence>
<evidence type="ECO:0000269" key="13">
    <source>
    </source>
</evidence>
<evidence type="ECO:0000269" key="14">
    <source>
    </source>
</evidence>
<evidence type="ECO:0000269" key="15">
    <source>
    </source>
</evidence>
<evidence type="ECO:0000269" key="16">
    <source>
    </source>
</evidence>
<evidence type="ECO:0000269" key="17">
    <source>
    </source>
</evidence>
<evidence type="ECO:0000269" key="18">
    <source>
    </source>
</evidence>
<evidence type="ECO:0000269" key="19">
    <source>
    </source>
</evidence>
<evidence type="ECO:0000269" key="20">
    <source>
    </source>
</evidence>
<evidence type="ECO:0000269" key="21">
    <source>
    </source>
</evidence>
<evidence type="ECO:0000269" key="22">
    <source>
    </source>
</evidence>
<evidence type="ECO:0000269" key="23">
    <source>
    </source>
</evidence>
<evidence type="ECO:0000269" key="24">
    <source>
    </source>
</evidence>
<evidence type="ECO:0000269" key="25">
    <source>
    </source>
</evidence>
<evidence type="ECO:0000269" key="26">
    <source>
    </source>
</evidence>
<evidence type="ECO:0000269" key="27">
    <source>
    </source>
</evidence>
<evidence type="ECO:0000269" key="28">
    <source>
    </source>
</evidence>
<evidence type="ECO:0000269" key="29">
    <source>
    </source>
</evidence>
<evidence type="ECO:0000269" key="30">
    <source>
    </source>
</evidence>
<evidence type="ECO:0000303" key="31">
    <source>
    </source>
</evidence>
<evidence type="ECO:0000303" key="32">
    <source>
    </source>
</evidence>
<evidence type="ECO:0000305" key="33"/>
<evidence type="ECO:0007744" key="34">
    <source>
    </source>
</evidence>
<evidence type="ECO:0007744" key="35">
    <source>
    </source>
</evidence>
<evidence type="ECO:0007744" key="36">
    <source>
    </source>
</evidence>
<evidence type="ECO:0007744" key="37">
    <source>
    </source>
</evidence>
<evidence type="ECO:0007744" key="38">
    <source>
    </source>
</evidence>
<evidence type="ECO:0007744" key="39">
    <source>
    </source>
</evidence>
<evidence type="ECO:0007744" key="40">
    <source>
    </source>
</evidence>
<evidence type="ECO:0007744" key="41">
    <source>
    </source>
</evidence>
<evidence type="ECO:0007744" key="42">
    <source>
    </source>
</evidence>
<evidence type="ECO:0007829" key="43">
    <source>
        <dbReference type="PDB" id="2BZ8"/>
    </source>
</evidence>
<evidence type="ECO:0007829" key="44">
    <source>
        <dbReference type="PDB" id="2K6D"/>
    </source>
</evidence>
<evidence type="ECO:0007829" key="45">
    <source>
        <dbReference type="PDB" id="2K9G"/>
    </source>
</evidence>
<evidence type="ECO:0007829" key="46">
    <source>
        <dbReference type="PDB" id="2O2O"/>
    </source>
</evidence>
<evidence type="ECO:0007829" key="47">
    <source>
        <dbReference type="PDB" id="2YDL"/>
    </source>
</evidence>
<evidence type="ECO:0007829" key="48">
    <source>
        <dbReference type="PDB" id="5ABS"/>
    </source>
</evidence>
<protein>
    <recommendedName>
        <fullName>SH3 domain-containing kinase-binding protein 1</fullName>
    </recommendedName>
    <alternativeName>
        <fullName>CD2-binding protein 3</fullName>
        <shortName>CD2BP3</shortName>
    </alternativeName>
    <alternativeName>
        <fullName>Cbl-interacting protein of 85 kDa</fullName>
    </alternativeName>
    <alternativeName>
        <fullName>Human Src family kinase-binding protein 1</fullName>
        <shortName>HSB-1</shortName>
    </alternativeName>
</protein>